<accession>Q03468</accession>
<accession>D3DX94</accession>
<accession>E7EV46</accession>
<accession>Q5W0L9</accession>
<sequence>MPNEGIPHSSQTQEQDCLQSQPVSNNEEMAIKQESGGDGEVEEYLSFRSVGDGLSTSAVGCASAAPRRGPALLHIDRHQIQAVEPSAQALELQGLGVDVYDQDVLEQGVLQQVDNAIHEASRASQLVDVEKEYRSVLDDLTSCTTSLRQINKIIEQLSPQAATSRDINRKLDSVKRQKYNKEQQLKKITAKQKHLQAILGGAEVKIELDHASLEEDAEPGPSSLGSMLMPVQETAWEELIRTGQMTPFGTQIPQKQEKKPRKIMLNEASGFEKYLADQAKLSFERKKQGCNKRAARKAPAPVTPPAPVQNKNKPNKKARVLSKKEERLKKHIKKLQKRALQFQGKVGLPKARRPWESDMRPEAEGDSEGEESEYFPTEEEEEEEDDEVEGAEADLSGDGTDYELKPLPKGGKRQKKVPVQEIDDDFFPSSGEEAEAASVGEGGGGGRKVGRYRDDGDEDYYKQRLRRWNKLRLQDKEKRLKLEDDSEESDAEFDEGFKVPGFLFKKLFKYQQTGVRWLWELHCQQAGGILGDEMGLGKTIQIIAFLAGLSYSKIRTRGSNYRFEGLGPTVIVCPTTVMHQWVKEFHTWWPPFRVAILHETGSYTHKKEKLIRDVAHCHGILITSYSYIRLMQDDISRYDWHYVILDEGHKIRNPNAAVTLACKQFRTPHRIILSGSPMQNNLRELWSLFDFIFPGKLGTLPVFMEQFSVPITMGGYSNASPVQVKTAYKCACVLRDTINPYLLRRMKSDVKMSLSLPDKNEQVLFCRLTDEQHKVYQNFVDSKEVYRILNGEMQIFSGLIALRKICNHPDLFSGGPKNLKGLPDDELEEDQFGYWKRSGKMIVVESLLKIWHKQGQRVLLFSQSRQMLDILEVFLRAQKYTYLKMDGTTTIASRQPLITRYNEDTSIFVFLLTTRVGGLGVNLTGANRVVIYDPDWNPSTDTQARERAWRIGQKKQVTVYRLLTAGTIEEKIYHRQIFKQFLTNRVLKDPKQRRFFKSNDLYELFTLTSPDASQSTETSAIFAGTGSDVQTPKCHLKRRIQPAFGADHDVPKRKKFPASNISVNDATSSEEKSEAKGAEVNAVTSNRSDPLKDDPHMSSNVTSNDRLGEETNAVSGPEELSVISGNGECSNSSGTGKTSMPSGDESIDEKLGLSYKRERPSQAQTEAFWENKQMENNFYKHKSKTKHHSVAEEETLEKHLRPKQKPKNSKHCRDAKFEGTRIPHLVKKRRYQKQDSENKSEAKEQSNDDYVLEKLFKKSVGVHSVMKHDAIMDGASPDYVLVEAEANRVAQDALKALRLSRQRCLGAVSGVPTWTGHRGISGAPAGKKSRFGKKRNSNFSVQHPSSTSPTEKCQDGIMKKEGKDNVPEHFSGRAEDADSSSGPLASSSLLAKMRARNHLILPERLESESGHLQEASALLPTTEHDDLLVEMRNFIAFQAHTDGQASTREILQEFESKLSASQSCVFRELLRNLCTFHRTSGGEGIWKLKPEYC</sequence>
<keyword id="KW-0002">3D-structure</keyword>
<keyword id="KW-0913">Age-related macular degeneration</keyword>
<keyword id="KW-0025">Alternative splicing</keyword>
<keyword id="KW-0067">ATP-binding</keyword>
<keyword id="KW-0898">Cataract</keyword>
<keyword id="KW-0158">Chromosome</keyword>
<keyword id="KW-0172">Cockayne syndrome</keyword>
<keyword id="KW-0209">Deafness</keyword>
<keyword id="KW-0225">Disease variant</keyword>
<keyword id="KW-0227">DNA damage</keyword>
<keyword id="KW-0234">DNA repair</keyword>
<keyword id="KW-0238">DNA-binding</keyword>
<keyword id="KW-0242">Dwarfism</keyword>
<keyword id="KW-0347">Helicase</keyword>
<keyword id="KW-0378">Hydrolase</keyword>
<keyword id="KW-0991">Intellectual disability</keyword>
<keyword id="KW-1017">Isopeptide bond</keyword>
<keyword id="KW-0488">Methylation</keyword>
<keyword id="KW-0524">Neurogenesis</keyword>
<keyword id="KW-0547">Nucleotide-binding</keyword>
<keyword id="KW-0539">Nucleus</keyword>
<keyword id="KW-0597">Phosphoprotein</keyword>
<keyword id="KW-1267">Proteomics identification</keyword>
<keyword id="KW-1185">Reference proteome</keyword>
<keyword id="KW-0804">Transcription</keyword>
<keyword id="KW-0805">Transcription regulation</keyword>
<keyword id="KW-0832">Ubl conjugation</keyword>
<keyword id="KW-0857">Xeroderma pigmentosum</keyword>
<organism>
    <name type="scientific">Homo sapiens</name>
    <name type="common">Human</name>
    <dbReference type="NCBI Taxonomy" id="9606"/>
    <lineage>
        <taxon>Eukaryota</taxon>
        <taxon>Metazoa</taxon>
        <taxon>Chordata</taxon>
        <taxon>Craniata</taxon>
        <taxon>Vertebrata</taxon>
        <taxon>Euteleostomi</taxon>
        <taxon>Mammalia</taxon>
        <taxon>Eutheria</taxon>
        <taxon>Euarchontoglires</taxon>
        <taxon>Primates</taxon>
        <taxon>Haplorrhini</taxon>
        <taxon>Catarrhini</taxon>
        <taxon>Hominidae</taxon>
        <taxon>Homo</taxon>
    </lineage>
</organism>
<reference key="1">
    <citation type="journal article" date="1992" name="Cell">
        <title>ERCC6, a member of a subfamily of putative helicases, is involved in Cockayne's syndrome and preferential repair of active genes.</title>
        <authorList>
            <person name="Troelstra C."/>
            <person name="van Gool A."/>
            <person name="de Wit J."/>
            <person name="Vermeulen W."/>
            <person name="Bootsma D."/>
            <person name="Hoeijmakers J.H.J."/>
        </authorList>
    </citation>
    <scope>NUCLEOTIDE SEQUENCE [MRNA]</scope>
</reference>
<reference key="2">
    <citation type="journal article" date="1993" name="Nucleic Acids Res.">
        <title>Structure and expression of the excision repair gene ERCC6, involved in the human disorder Cockayne's syndrome group B.</title>
        <authorList>
            <person name="Troelstra C."/>
            <person name="Hesen V."/>
            <person name="Bootsma D."/>
            <person name="Hoeijmakers J.H.J."/>
        </authorList>
    </citation>
    <scope>NUCLEOTIDE SEQUENCE [GENOMIC DNA]</scope>
</reference>
<reference key="3">
    <citation type="submission" date="2002-12" db="EMBL/GenBank/DDBJ databases">
        <authorList>
            <consortium name="NIEHS SNPs program"/>
        </authorList>
    </citation>
    <scope>NUCLEOTIDE SEQUENCE [GENOMIC DNA]</scope>
    <scope>VARIANTS ASP-399; ALA-425; ASP-446; MET-942; CYS-1002; ARG-1095; VAL-1097; GLY-1213; PRO-1230; LEU-1308; VAL-1322; ARG-1372; ARG-1382; ARG-1410; ARG-1413 AND ILE-1441</scope>
</reference>
<reference key="4">
    <citation type="journal article" date="2004" name="Nature">
        <title>The DNA sequence and comparative analysis of human chromosome 10.</title>
        <authorList>
            <person name="Deloukas P."/>
            <person name="Earthrowl M.E."/>
            <person name="Grafham D.V."/>
            <person name="Rubenfield M."/>
            <person name="French L."/>
            <person name="Steward C.A."/>
            <person name="Sims S.K."/>
            <person name="Jones M.C."/>
            <person name="Searle S."/>
            <person name="Scott C."/>
            <person name="Howe K."/>
            <person name="Hunt S.E."/>
            <person name="Andrews T.D."/>
            <person name="Gilbert J.G.R."/>
            <person name="Swarbreck D."/>
            <person name="Ashurst J.L."/>
            <person name="Taylor A."/>
            <person name="Battles J."/>
            <person name="Bird C.P."/>
            <person name="Ainscough R."/>
            <person name="Almeida J.P."/>
            <person name="Ashwell R.I.S."/>
            <person name="Ambrose K.D."/>
            <person name="Babbage A.K."/>
            <person name="Bagguley C.L."/>
            <person name="Bailey J."/>
            <person name="Banerjee R."/>
            <person name="Bates K."/>
            <person name="Beasley H."/>
            <person name="Bray-Allen S."/>
            <person name="Brown A.J."/>
            <person name="Brown J.Y."/>
            <person name="Burford D.C."/>
            <person name="Burrill W."/>
            <person name="Burton J."/>
            <person name="Cahill P."/>
            <person name="Camire D."/>
            <person name="Carter N.P."/>
            <person name="Chapman J.C."/>
            <person name="Clark S.Y."/>
            <person name="Clarke G."/>
            <person name="Clee C.M."/>
            <person name="Clegg S."/>
            <person name="Corby N."/>
            <person name="Coulson A."/>
            <person name="Dhami P."/>
            <person name="Dutta I."/>
            <person name="Dunn M."/>
            <person name="Faulkner L."/>
            <person name="Frankish A."/>
            <person name="Frankland J.A."/>
            <person name="Garner P."/>
            <person name="Garnett J."/>
            <person name="Gribble S."/>
            <person name="Griffiths C."/>
            <person name="Grocock R."/>
            <person name="Gustafson E."/>
            <person name="Hammond S."/>
            <person name="Harley J.L."/>
            <person name="Hart E."/>
            <person name="Heath P.D."/>
            <person name="Ho T.P."/>
            <person name="Hopkins B."/>
            <person name="Horne J."/>
            <person name="Howden P.J."/>
            <person name="Huckle E."/>
            <person name="Hynds C."/>
            <person name="Johnson C."/>
            <person name="Johnson D."/>
            <person name="Kana A."/>
            <person name="Kay M."/>
            <person name="Kimberley A.M."/>
            <person name="Kershaw J.K."/>
            <person name="Kokkinaki M."/>
            <person name="Laird G.K."/>
            <person name="Lawlor S."/>
            <person name="Lee H.M."/>
            <person name="Leongamornlert D.A."/>
            <person name="Laird G."/>
            <person name="Lloyd C."/>
            <person name="Lloyd D.M."/>
            <person name="Loveland J."/>
            <person name="Lovell J."/>
            <person name="McLaren S."/>
            <person name="McLay K.E."/>
            <person name="McMurray A."/>
            <person name="Mashreghi-Mohammadi M."/>
            <person name="Matthews L."/>
            <person name="Milne S."/>
            <person name="Nickerson T."/>
            <person name="Nguyen M."/>
            <person name="Overton-Larty E."/>
            <person name="Palmer S.A."/>
            <person name="Pearce A.V."/>
            <person name="Peck A.I."/>
            <person name="Pelan S."/>
            <person name="Phillimore B."/>
            <person name="Porter K."/>
            <person name="Rice C.M."/>
            <person name="Rogosin A."/>
            <person name="Ross M.T."/>
            <person name="Sarafidou T."/>
            <person name="Sehra H.K."/>
            <person name="Shownkeen R."/>
            <person name="Skuce C.D."/>
            <person name="Smith M."/>
            <person name="Standring L."/>
            <person name="Sycamore N."/>
            <person name="Tester J."/>
            <person name="Thorpe A."/>
            <person name="Torcasso W."/>
            <person name="Tracey A."/>
            <person name="Tromans A."/>
            <person name="Tsolas J."/>
            <person name="Wall M."/>
            <person name="Walsh J."/>
            <person name="Wang H."/>
            <person name="Weinstock K."/>
            <person name="West A.P."/>
            <person name="Willey D.L."/>
            <person name="Whitehead S.L."/>
            <person name="Wilming L."/>
            <person name="Wray P.W."/>
            <person name="Young L."/>
            <person name="Chen Y."/>
            <person name="Lovering R.C."/>
            <person name="Moschonas N.K."/>
            <person name="Siebert R."/>
            <person name="Fechtel K."/>
            <person name="Bentley D."/>
            <person name="Durbin R.M."/>
            <person name="Hubbard T."/>
            <person name="Doucette-Stamm L."/>
            <person name="Beck S."/>
            <person name="Smith D.R."/>
            <person name="Rogers J."/>
        </authorList>
    </citation>
    <scope>NUCLEOTIDE SEQUENCE [LARGE SCALE GENOMIC DNA]</scope>
</reference>
<reference key="5">
    <citation type="submission" date="2005-09" db="EMBL/GenBank/DDBJ databases">
        <authorList>
            <person name="Mural R.J."/>
            <person name="Istrail S."/>
            <person name="Sutton G.G."/>
            <person name="Florea L."/>
            <person name="Halpern A.L."/>
            <person name="Mobarry C.M."/>
            <person name="Lippert R."/>
            <person name="Walenz B."/>
            <person name="Shatkay H."/>
            <person name="Dew I."/>
            <person name="Miller J.R."/>
            <person name="Flanigan M.J."/>
            <person name="Edwards N.J."/>
            <person name="Bolanos R."/>
            <person name="Fasulo D."/>
            <person name="Halldorsson B.V."/>
            <person name="Hannenhalli S."/>
            <person name="Turner R."/>
            <person name="Yooseph S."/>
            <person name="Lu F."/>
            <person name="Nusskern D.R."/>
            <person name="Shue B.C."/>
            <person name="Zheng X.H."/>
            <person name="Zhong F."/>
            <person name="Delcher A.L."/>
            <person name="Huson D.H."/>
            <person name="Kravitz S.A."/>
            <person name="Mouchard L."/>
            <person name="Reinert K."/>
            <person name="Remington K.A."/>
            <person name="Clark A.G."/>
            <person name="Waterman M.S."/>
            <person name="Eichler E.E."/>
            <person name="Adams M.D."/>
            <person name="Hunkapiller M.W."/>
            <person name="Myers E.W."/>
            <person name="Venter J.C."/>
        </authorList>
    </citation>
    <scope>NUCLEOTIDE SEQUENCE [LARGE SCALE GENOMIC DNA]</scope>
</reference>
<reference key="6">
    <citation type="journal article" date="1998" name="J. Biol. Chem.">
        <title>Biochemical and biological characterization of wild-type and ATPase-deficient Cockayne syndrome B repair protein.</title>
        <authorList>
            <person name="Citterio E."/>
            <person name="Rademakers S."/>
            <person name="van der Horst G.T."/>
            <person name="van Gool A.J."/>
            <person name="Hoeijmakers J.H."/>
            <person name="Vermeulen W."/>
        </authorList>
    </citation>
    <scope>FUNCTION</scope>
    <scope>CATALYTIC ACTIVITY</scope>
    <scope>MUTAGENESIS OF LYS-538</scope>
</reference>
<reference key="7">
    <citation type="journal article" date="1999" name="Hum. Mutat.">
        <title>A summary of mutations in the UV-sensitive disorders: xeroderma pigmentosum, Cockayne syndrome, and trichothiodystrophy.</title>
        <authorList>
            <person name="Cleaver J.E."/>
            <person name="Thompson L.H."/>
            <person name="Richardson A.S."/>
            <person name="States J.C."/>
        </authorList>
    </citation>
    <scope>REVIEW ON VARIANTS CSB</scope>
</reference>
<reference key="8">
    <citation type="journal article" date="2000" name="Am. J. Hum. Genet.">
        <title>Manitoba aboriginal kindred with original cerebro-oculo-facio-skeletal syndrome has a mutation in the Cockayne syndrome group B (CSB) gene.</title>
        <authorList>
            <person name="Meira L.B."/>
            <person name="Graham J.M. Jr."/>
            <person name="Greenberg C.R."/>
            <person name="Busch D.B."/>
            <person name="Doughty A.T.B."/>
            <person name="Ziffer D.W."/>
            <person name="Coleman D.M."/>
            <person name="Savre-Train I."/>
            <person name="Friedberg E.C."/>
        </authorList>
    </citation>
    <scope>DISEASE</scope>
</reference>
<reference key="9">
    <citation type="journal article" date="2000" name="Hum. Mol. Genet.">
        <title>Identical mutations in the CSB gene associated with either Cockayne syndrome or the DeSanctis-Cacchione variant of xeroderma pigmentosum.</title>
        <authorList>
            <person name="Colella S."/>
            <person name="Nardo T."/>
            <person name="Botta E."/>
            <person name="Lehmann A.R."/>
            <person name="Stefanini M."/>
        </authorList>
    </citation>
    <scope>DISEASE</scope>
</reference>
<reference key="10">
    <citation type="journal article" date="2004" name="Proc. Natl. Acad. Sci. U.S.A.">
        <title>Complete absence of Cockayne syndrome group B gene product gives rise to UV-sensitive syndrome but not Cockayne syndrome.</title>
        <authorList>
            <person name="Horibata K."/>
            <person name="Iwamoto Y."/>
            <person name="Kuraoka I."/>
            <person name="Jaspers N.G.J."/>
            <person name="Kurimasa A."/>
            <person name="Oshimura M."/>
            <person name="Ichihashi M."/>
            <person name="Tanaka K."/>
        </authorList>
    </citation>
    <scope>INVOLVEMENT IN UVSS1</scope>
</reference>
<reference key="11">
    <citation type="journal article" date="2005" name="FEBS J.">
        <title>The Cockayne syndrome group B protein is a functional dimer.</title>
        <authorList>
            <person name="Christiansen M."/>
            <person name="Thorslund T."/>
            <person name="Jochimsen B."/>
            <person name="Bohr V.A."/>
            <person name="Stevnsner T."/>
        </authorList>
    </citation>
    <scope>SUBUNIT</scope>
    <scope>SUBCELLULAR LOCATION</scope>
</reference>
<reference key="12">
    <citation type="journal article" date="2005" name="J. Biol. Chem.">
        <title>The CSB protein actively wraps DNA.</title>
        <authorList>
            <person name="Beerens N."/>
            <person name="Hoeijmakers J.H."/>
            <person name="Kanaar R."/>
            <person name="Vermeulen W."/>
            <person name="Wyman C."/>
        </authorList>
    </citation>
    <scope>FUNCTION</scope>
    <scope>SUBUNIT</scope>
    <scope>DNA-BINDING</scope>
</reference>
<reference key="13">
    <citation type="journal article" date="2005" name="Mol. Cell">
        <title>Recognition of RNA polymerase II and transcription bubbles by XPG, CSB, and TFIIH: insights for transcription-coupled repair and Cockayne Syndrome.</title>
        <authorList>
            <person name="Sarker A.H."/>
            <person name="Tsutakawa S.E."/>
            <person name="Kostek S."/>
            <person name="Ng C."/>
            <person name="Shin D.S."/>
            <person name="Peris M."/>
            <person name="Campeau E."/>
            <person name="Tainer J.A."/>
            <person name="Nogales E."/>
            <person name="Cooper P.K."/>
        </authorList>
    </citation>
    <scope>FUNCTION</scope>
    <scope>CATALYTIC ACTIVITY</scope>
    <scope>INTERACTION WITH ERCC5 AND RNA POLYMERASE II</scope>
</reference>
<reference key="14">
    <citation type="journal article" date="2006" name="Cell">
        <title>Global, in vivo, and site-specific phosphorylation dynamics in signaling networks.</title>
        <authorList>
            <person name="Olsen J.V."/>
            <person name="Blagoev B."/>
            <person name="Gnad F."/>
            <person name="Macek B."/>
            <person name="Kumar C."/>
            <person name="Mortensen P."/>
            <person name="Mann M."/>
        </authorList>
    </citation>
    <scope>IDENTIFICATION BY MASS SPECTROMETRY [LARGE SCALE ANALYSIS]</scope>
    <source>
        <tissue>Cervix carcinoma</tissue>
    </source>
</reference>
<reference key="15">
    <citation type="journal article" date="2006" name="Genes Dev.">
        <title>CSA-dependent degradation of CSB by the ubiquitin-proteasome pathway establishes a link between complementation factors of the Cockayne syndrome.</title>
        <authorList>
            <person name="Groisman R."/>
            <person name="Kuraoka I."/>
            <person name="Chevallier O."/>
            <person name="Gaye N."/>
            <person name="Magnaldo T."/>
            <person name="Tanaka K."/>
            <person name="Kisselev A.F."/>
            <person name="Harel-Bellan A."/>
            <person name="Nakatani Y."/>
        </authorList>
    </citation>
    <scope>INTERACTION WITH ERCC8</scope>
    <scope>UBIQUITINATION BY THE CSA COMPLEX</scope>
    <scope>PROTEASOMAL DEGRADATION</scope>
</reference>
<reference key="16">
    <citation type="journal article" date="2006" name="J. Biol. Chem.">
        <title>The WSTF-SNF2h chromatin remodeling complex interacts with several nuclear proteins in transcription.</title>
        <authorList>
            <person name="Cavellan E."/>
            <person name="Asp P."/>
            <person name="Percipalle P."/>
            <person name="Oestlund Farrants A.-K."/>
        </authorList>
    </citation>
    <scope>IDENTIFICATION IN THE B-WICH COMPLEX</scope>
</reference>
<reference key="17">
    <citation type="journal article" date="2006" name="Mol. Cell">
        <title>Cockayne syndrome A and B proteins differentially regulate recruitment of chromatin remodeling and repair factors to stalled RNA polymerase II in vivo.</title>
        <authorList>
            <person name="Fousteri M."/>
            <person name="Vermeulen W."/>
            <person name="van Zeeland A.A."/>
            <person name="Mullenders L.H."/>
        </authorList>
    </citation>
    <scope>RETRACTED PAPER</scope>
</reference>
<reference key="18">
    <citation type="journal article" date="2021" name="Mol. Cell">
        <authorList>
            <person name="Fousteri M."/>
            <person name="Vermeulen W."/>
            <person name="van Zeeland A.A."/>
            <person name="Mullenders L.H.F."/>
        </authorList>
    </citation>
    <scope>RETRACTION NOTICE OF PUBMED:16916636</scope>
</reference>
<reference key="19">
    <citation type="journal article" date="2006" name="Nat. Biotechnol.">
        <title>A probability-based approach for high-throughput protein phosphorylation analysis and site localization.</title>
        <authorList>
            <person name="Beausoleil S.A."/>
            <person name="Villen J."/>
            <person name="Gerber S.A."/>
            <person name="Rush J."/>
            <person name="Gygi S.P."/>
        </authorList>
    </citation>
    <scope>PHOSPHORYLATION [LARGE SCALE ANALYSIS] AT SER-158</scope>
    <scope>IDENTIFICATION BY MASS SPECTROMETRY [LARGE SCALE ANALYSIS]</scope>
    <source>
        <tissue>Cervix carcinoma</tissue>
    </source>
</reference>
<reference key="20">
    <citation type="journal article" date="2006" name="Proc. Natl. Acad. Sci. U.S.A.">
        <title>Synergic effect of polymorphisms in ERCC6 5' flanking region and complement factor H on age-related macular degeneration predisposition.</title>
        <authorList>
            <person name="Tuo J."/>
            <person name="Ning B."/>
            <person name="Bojanowski C.M."/>
            <person name="Lin Z.-N."/>
            <person name="Ross R.J."/>
            <person name="Reed G.F."/>
            <person name="Shen D."/>
            <person name="Jiao X."/>
            <person name="Zhou M."/>
            <person name="Chew E.Y."/>
            <person name="Kadlubar F.F."/>
            <person name="Chan C.-C."/>
        </authorList>
    </citation>
    <scope>INVOLVEMENT IN ARMD5</scope>
</reference>
<reference key="21">
    <citation type="journal article" date="2008" name="Mol. Cell">
        <title>Kinase-selective enrichment enables quantitative phosphoproteomics of the kinome across the cell cycle.</title>
        <authorList>
            <person name="Daub H."/>
            <person name="Olsen J.V."/>
            <person name="Bairlein M."/>
            <person name="Gnad F."/>
            <person name="Oppermann F.S."/>
            <person name="Korner R."/>
            <person name="Greff Z."/>
            <person name="Keri G."/>
            <person name="Stemmann O."/>
            <person name="Mann M."/>
        </authorList>
    </citation>
    <scope>PHOSPHORYLATION [LARGE SCALE ANALYSIS] AT SER-158</scope>
    <scope>IDENTIFICATION BY MASS SPECTROMETRY [LARGE SCALE ANALYSIS]</scope>
    <source>
        <tissue>Cervix carcinoma</tissue>
    </source>
</reference>
<reference key="22">
    <citation type="journal article" date="2008" name="Nat. Chem. Biol.">
        <title>Protein lysine methyltransferase G9a acts on non-histone targets.</title>
        <authorList>
            <person name="Rathert P."/>
            <person name="Dhayalan A."/>
            <person name="Murakami M."/>
            <person name="Zhang X."/>
            <person name="Tamas R."/>
            <person name="Jurkowska R."/>
            <person name="Komatsu Y."/>
            <person name="Shinkai Y."/>
            <person name="Cheng X."/>
            <person name="Jeltsch A."/>
        </authorList>
    </citation>
    <scope>METHYLATION AT LYS-170; LYS-297; LYS-448 AND LYS-1054</scope>
</reference>
<reference key="23">
    <citation type="journal article" date="2008" name="PLoS Genet.">
        <title>An abundant evolutionarily conserved CSB-PiggyBac fusion protein expressed in Cockayne syndrome.</title>
        <authorList>
            <person name="Newman J.C."/>
            <person name="Bailey A.D."/>
            <person name="Fan H.Y."/>
            <person name="Pavelitz T."/>
            <person name="Weiner A.M."/>
        </authorList>
    </citation>
    <scope>ALTERNATIVE SPLICING</scope>
</reference>
<reference key="24">
    <citation type="journal article" date="2008" name="Proc. Natl. Acad. Sci. U.S.A.">
        <title>A quantitative atlas of mitotic phosphorylation.</title>
        <authorList>
            <person name="Dephoure N."/>
            <person name="Zhou C."/>
            <person name="Villen J."/>
            <person name="Beausoleil S.A."/>
            <person name="Bakalarski C.E."/>
            <person name="Elledge S.J."/>
            <person name="Gygi S.P."/>
        </authorList>
    </citation>
    <scope>PHOSPHORYLATION [LARGE SCALE ANALYSIS] AT SER-158; SER-429; SER-430; SER-1142 AND SER-1348</scope>
    <scope>IDENTIFICATION BY MASS SPECTROMETRY [LARGE SCALE ANALYSIS]</scope>
    <source>
        <tissue>Cervix carcinoma</tissue>
    </source>
</reference>
<reference key="25">
    <citation type="journal article" date="2010" name="Mol. Cell">
        <title>A ubiquitin-binding domain in cockayne syndrome B required for transcription-coupled nucleotide excision repair.</title>
        <authorList>
            <person name="Anindya R."/>
            <person name="Mari P.O."/>
            <person name="Kristensen U."/>
            <person name="Kool H."/>
            <person name="Giglia-Mari G."/>
            <person name="Mullenders L.H."/>
            <person name="Fousteri M."/>
            <person name="Vermeulen W."/>
            <person name="Egly J.M."/>
            <person name="Svejstrup J.Q."/>
        </authorList>
    </citation>
    <scope>FUNCTION</scope>
    <scope>DOMAIN UBD</scope>
    <scope>UBIQUITIN-BINDING</scope>
    <scope>UBIQUITINATION AT THE C-TERMINUS</scope>
    <scope>MUTAGENESIS OF 1427-LEU-LEU-1428</scope>
</reference>
<reference key="26">
    <citation type="journal article" date="2010" name="Sci. Signal.">
        <title>Quantitative phosphoproteomics reveals widespread full phosphorylation site occupancy during mitosis.</title>
        <authorList>
            <person name="Olsen J.V."/>
            <person name="Vermeulen M."/>
            <person name="Santamaria A."/>
            <person name="Kumar C."/>
            <person name="Miller M.L."/>
            <person name="Jensen L.J."/>
            <person name="Gnad F."/>
            <person name="Cox J."/>
            <person name="Jensen T.S."/>
            <person name="Nigg E.A."/>
            <person name="Brunak S."/>
            <person name="Mann M."/>
        </authorList>
    </citation>
    <scope>PHOSPHORYLATION [LARGE SCALE ANALYSIS] AT SER-158</scope>
    <scope>IDENTIFICATION BY MASS SPECTROMETRY [LARGE SCALE ANALYSIS]</scope>
    <source>
        <tissue>Cervix carcinoma</tissue>
    </source>
</reference>
<reference key="27">
    <citation type="journal article" date="2011" name="BMC Syst. Biol.">
        <title>Initial characterization of the human central proteome.</title>
        <authorList>
            <person name="Burkard T.R."/>
            <person name="Planyavsky M."/>
            <person name="Kaupe I."/>
            <person name="Breitwieser F.P."/>
            <person name="Buerckstuemmer T."/>
            <person name="Bennett K.L."/>
            <person name="Superti-Furga G."/>
            <person name="Colinge J."/>
        </authorList>
    </citation>
    <scope>IDENTIFICATION BY MASS SPECTROMETRY [LARGE SCALE ANALYSIS]</scope>
</reference>
<reference key="28">
    <citation type="journal article" date="2011" name="Sci. Signal.">
        <title>System-wide temporal characterization of the proteome and phosphoproteome of human embryonic stem cell differentiation.</title>
        <authorList>
            <person name="Rigbolt K.T."/>
            <person name="Prokhorova T.A."/>
            <person name="Akimov V."/>
            <person name="Henningsen J."/>
            <person name="Johansen P.T."/>
            <person name="Kratchmarova I."/>
            <person name="Kassem M."/>
            <person name="Mann M."/>
            <person name="Olsen J.V."/>
            <person name="Blagoev B."/>
        </authorList>
    </citation>
    <scope>PHOSPHORYLATION [LARGE SCALE ANALYSIS] AT SER-429; SER-430; SER-486 AND SER-489</scope>
    <scope>IDENTIFICATION BY MASS SPECTROMETRY [LARGE SCALE ANALYSIS]</scope>
</reference>
<reference key="29">
    <citation type="journal article" date="2012" name="DNA Repair">
        <title>The conserved Cockayne syndrome B-piggyBac fusion protein (CSB-PGBD3) affects DNA repair and induces both interferon-like and innate antiviral responses in CSB-null cells.</title>
        <authorList>
            <person name="Bailey A.D."/>
            <person name="Gray L.T."/>
            <person name="Pavelitz T."/>
            <person name="Newman J.C."/>
            <person name="Horibata K."/>
            <person name="Tanaka K."/>
            <person name="Weiner A.M."/>
        </authorList>
    </citation>
    <scope>FUNCTION</scope>
</reference>
<reference key="30">
    <citation type="journal article" date="2012" name="Nat. Genet.">
        <title>Mutations in UVSSA cause UV-sensitive syndrome and impair RNA polymerase IIo processing in transcription-coupled nucleotide-excision repair.</title>
        <authorList>
            <person name="Nakazawa Y."/>
            <person name="Sasaki K."/>
            <person name="Mitsutake N."/>
            <person name="Matsuse M."/>
            <person name="Shimada M."/>
            <person name="Nardo T."/>
            <person name="Takahashi Y."/>
            <person name="Ohyama K."/>
            <person name="Ito K."/>
            <person name="Mishima H."/>
            <person name="Nomura M."/>
            <person name="Kinoshita A."/>
            <person name="Ono S."/>
            <person name="Takenaka K."/>
            <person name="Masuyama R."/>
            <person name="Kudo T."/>
            <person name="Slor H."/>
            <person name="Utani A."/>
            <person name="Tateishi S."/>
            <person name="Yamashita S."/>
            <person name="Stefanini M."/>
            <person name="Lehmann A.R."/>
            <person name="Yoshiura K.I."/>
            <person name="Ogi T."/>
        </authorList>
    </citation>
    <scope>UBIQUITINATION</scope>
</reference>
<reference key="31">
    <citation type="journal article" date="2012" name="Nat. Genet.">
        <title>UV-sensitive syndrome protein UVSSA recruits USP7 to regulate transcription-coupled repair.</title>
        <authorList>
            <person name="Schwertman P."/>
            <person name="Lagarou A."/>
            <person name="Dekkers D.H."/>
            <person name="Raams A."/>
            <person name="van der Hoek A.C."/>
            <person name="Laffeber C."/>
            <person name="Hoeijmakers J.H."/>
            <person name="Demmers J.A."/>
            <person name="Fousteri M."/>
            <person name="Vermeulen W."/>
            <person name="Marteijn J.A."/>
        </authorList>
    </citation>
    <scope>UBIQUITINATION</scope>
</reference>
<reference key="32">
    <citation type="journal article" date="2012" name="Nat. Genet.">
        <title>Mutations in UVSSA cause UV-sensitive syndrome and destabilize ERCC6 in transcription-coupled DNA repair.</title>
        <authorList>
            <person name="Zhang X."/>
            <person name="Horibata K."/>
            <person name="Saijo M."/>
            <person name="Ishigami C."/>
            <person name="Ukai A."/>
            <person name="Kanno S.I."/>
            <person name="Tahara H."/>
            <person name="Neilan E.G."/>
            <person name="Honma M."/>
            <person name="Nohmi T."/>
            <person name="Yasui A."/>
            <person name="Tanaka K."/>
        </authorList>
    </citation>
    <scope>UBIQUITINATION</scope>
    <scope>INTERACTION WITH UVSSA</scope>
</reference>
<reference key="33">
    <citation type="journal article" date="2013" name="J. Proteome Res.">
        <title>Toward a comprehensive characterization of a human cancer cell phosphoproteome.</title>
        <authorList>
            <person name="Zhou H."/>
            <person name="Di Palma S."/>
            <person name="Preisinger C."/>
            <person name="Peng M."/>
            <person name="Polat A.N."/>
            <person name="Heck A.J."/>
            <person name="Mohammed S."/>
        </authorList>
    </citation>
    <scope>PHOSPHORYLATION [LARGE SCALE ANALYSIS] AT SER-158 AND SER-1348</scope>
    <scope>IDENTIFICATION BY MASS SPECTROMETRY [LARGE SCALE ANALYSIS]</scope>
    <source>
        <tissue>Cervix carcinoma</tissue>
        <tissue>Erythroleukemia</tissue>
    </source>
</reference>
<reference key="34">
    <citation type="journal article" date="2014" name="Cell Death Dis.">
        <title>The cockayne syndrome B protein is essential for neuronal differentiation and neuritogenesis.</title>
        <authorList>
            <person name="Ciaffardini F."/>
            <person name="Nicolai S."/>
            <person name="Caputo M."/>
            <person name="Canu G."/>
            <person name="Paccosi E."/>
            <person name="Costantino M."/>
            <person name="Frontini M."/>
            <person name="Balajee A.S."/>
            <person name="Proietti-De-Santis L."/>
        </authorList>
    </citation>
    <scope>FUNCTION</scope>
    <scope>INTERACTION WITH SMARCC2; SMARCB1 AND NBAF COMPLEX</scope>
</reference>
<reference key="35">
    <citation type="journal article" date="2015" name="EMBO J.">
        <title>Cockayne syndrome group B protein regulates DNA double-strand break repair and checkpoint activation.</title>
        <authorList>
            <person name="Batenburg N.L."/>
            <person name="Thompson E.L."/>
            <person name="Hendrickson E.A."/>
            <person name="Zhu X.D."/>
        </authorList>
    </citation>
    <scope>FUNCTION</scope>
    <scope>CHARACTERIZATION OF VARIANT CSB ARG-851</scope>
</reference>
<reference key="36">
    <citation type="journal article" date="2015" name="PLoS ONE">
        <title>Identification of Novel Proteins Co-Purifying with Cockayne Syndrome Group B (CSB) Reveals Potential Roles for CSB in RNA Metabolism and Chromatin Dynamics.</title>
        <authorList>
            <person name="Nicolai S."/>
            <person name="Filippi S."/>
            <person name="Caputo M."/>
            <person name="Cipak L."/>
            <person name="Gregan J."/>
            <person name="Ammerer G."/>
            <person name="Frontini M."/>
            <person name="Willems D."/>
            <person name="Prantera G."/>
            <person name="Balajee A.S."/>
            <person name="Proietti-De-Santis L."/>
        </authorList>
    </citation>
    <scope>INTERACTION WITH CAND1; CSTF1; DDX3X; DDX5; DDX17; DDX23; DHX36; HDAC1; HNRNPU; MTA2; PRPF3; PSMD3; RBBP4; SFPQ; SMARCA1; SMARCA2; TOP1; USP7; XRCC5; COPS3; COPS4; COPS6; DDX1; DDX41; GATAD2A; GATAD2B; PRPF4; PSMC5; SF3B2; CTR9; NONO; PSMD12 AND TOP2A</scope>
</reference>
<reference key="37">
    <citation type="journal article" date="2016" name="J. Biol. Chem.">
        <title>The C-terminal Region and SUMOylation of Cockayne Syndrome Group B Protein Play Critical Roles in Transcription-coupled Nucleotide Excision Repair.</title>
        <authorList>
            <person name="Sin Y."/>
            <person name="Tanaka K."/>
            <person name="Saijo M."/>
        </authorList>
    </citation>
    <scope>FUNCTION</scope>
    <scope>SUBCELLULAR LOCATION</scope>
    <scope>INTERACTION WITH RNA POLYMERASE II</scope>
    <scope>SUMOYLATION AT LYS-205</scope>
    <scope>MUTAGENESIS OF LYS-205; LYS-1457; LYS-1487 AND LYS-1489</scope>
    <scope>DOMAIN UBD</scope>
</reference>
<reference key="38">
    <citation type="journal article" date="2017" name="J. Biol. Chem.">
        <title>Cockayne syndrome B protein regulates recruitment of the Elongin A ubiquitin ligase to sites of DNA damage.</title>
        <authorList>
            <person name="Weems J.C."/>
            <person name="Slaughter B.D."/>
            <person name="Unruh J.R."/>
            <person name="Boeing S."/>
            <person name="Hall S.M."/>
            <person name="McLaird M.B."/>
            <person name="Yasukawa T."/>
            <person name="Aso T."/>
            <person name="Svejstrup J.Q."/>
            <person name="Conaway J.W."/>
            <person name="Conaway R.C."/>
        </authorList>
    </citation>
    <scope>FUNCTION</scope>
    <scope>INTERACTION WITH ELOA AND CUL5</scope>
</reference>
<reference key="39">
    <citation type="journal article" date="2017" name="Nat. Commun.">
        <title>ATM and CDK2 control chromatin remodeler CSB to inhibit RIF1 in DSB repair pathway choice.</title>
        <authorList>
            <person name="Batenburg N.L."/>
            <person name="Walker J.R."/>
            <person name="Noordermeer S.M."/>
            <person name="Moatti N."/>
            <person name="Durocher D."/>
            <person name="Zhu X.D."/>
        </authorList>
    </citation>
    <scope>FUNCTION</scope>
    <scope>INTERACTION WITH RIF1</scope>
    <scope>DOMAIN</scope>
    <scope>PHOSPHORYLATION AT SER-10 AND SER-158</scope>
    <scope>MUTAGENESIS OF SER-10; SER-158; LEU-1470; TRP-1486 AND LEU-1488</scope>
    <scope>CHARACTERIZATION OF VARIANT CSB ARG-851</scope>
</reference>
<reference key="40">
    <citation type="journal article" date="2017" name="Nat. Struct. Mol. Biol.">
        <title>Site-specific mapping of the human SUMO proteome reveals co-modification with phosphorylation.</title>
        <authorList>
            <person name="Hendriks I.A."/>
            <person name="Lyon D."/>
            <person name="Young C."/>
            <person name="Jensen L.J."/>
            <person name="Vertegaal A.C."/>
            <person name="Nielsen M.L."/>
        </authorList>
    </citation>
    <scope>SUMOYLATION [LARGE SCALE ANALYSIS] AT LYS-255</scope>
    <scope>IDENTIFICATION BY MASS SPECTROMETRY [LARGE SCALE ANALYSIS]</scope>
</reference>
<reference key="41">
    <citation type="journal article" date="2018" name="Oncotarget">
        <title>CSA and CSB play a role in the response to DNA breaks.</title>
        <authorList>
            <person name="Pascucci B."/>
            <person name="Fragale A."/>
            <person name="Marabitti V."/>
            <person name="Leuzzi G."/>
            <person name="Calcagnile A.S."/>
            <person name="Parlanti E."/>
            <person name="Franchitto A."/>
            <person name="Dogliotti E."/>
            <person name="D'Errico M."/>
        </authorList>
    </citation>
    <scope>FUNCTION</scope>
</reference>
<reference key="42">
    <citation type="journal article" date="2020" name="Cell">
        <title>Ubiquitination of DNA Damage-Stalled RNAPII Promotes Transcription-Coupled Repair.</title>
        <authorList>
            <person name="Nakazawa Y."/>
            <person name="Hara Y."/>
            <person name="Oka Y."/>
            <person name="Komine O."/>
            <person name="van den Heuvel D."/>
            <person name="Guo C."/>
            <person name="Daigaku Y."/>
            <person name="Isono M."/>
            <person name="He Y."/>
            <person name="Shimada M."/>
            <person name="Kato K."/>
            <person name="Jia N."/>
            <person name="Hashimoto S."/>
            <person name="Kotani Y."/>
            <person name="Miyoshi Y."/>
            <person name="Tanaka M."/>
            <person name="Sobue A."/>
            <person name="Mitsutake N."/>
            <person name="Suganami T."/>
            <person name="Masuda A."/>
            <person name="Ohno K."/>
            <person name="Nakada S."/>
            <person name="Mashimo T."/>
            <person name="Yamanaka K."/>
            <person name="Luijsterburg M.S."/>
            <person name="Ogi T."/>
        </authorList>
    </citation>
    <scope>INTERACTION WITH RNA POLYMERASE II</scope>
</reference>
<reference key="43">
    <citation type="journal article" date="2020" name="Nat. Commun.">
        <title>The cooperative action of CSB, CSA, and UVSSA target TFIIH to DNA damage-stalled RNA polymerase II.</title>
        <authorList>
            <person name="van der Weegen Y."/>
            <person name="Golan-Berman H."/>
            <person name="Mevissen T.E.T."/>
            <person name="Apelt K."/>
            <person name="Gonzalez-Prieto R."/>
            <person name="Goedhart J."/>
            <person name="Heilbrun E.E."/>
            <person name="Vertegaal A.C.O."/>
            <person name="van den Heuvel D."/>
            <person name="Walter J.C."/>
            <person name="Adar S."/>
            <person name="Luijsterburg M.S."/>
        </authorList>
    </citation>
    <scope>FUNCTION</scope>
    <scope>SUBCELLULAR LOCATION</scope>
    <scope>DOMAIN</scope>
    <scope>MUTAGENESIS OF 1385-ALA--LEU-1399</scope>
</reference>
<reference key="44">
    <citation type="journal article" date="2024" name="Nat. Cell Biol.">
        <title>Transcription-coupled DNA-protein crosslink repair by CSB and CRL4CSA-mediated degradation.</title>
        <authorList>
            <person name="van Sluis M."/>
            <person name="Yu Q."/>
            <person name="van der Woude M."/>
            <person name="Gonzalo-Hansen C."/>
            <person name="Dealy S.C."/>
            <person name="Janssens R.C."/>
            <person name="Somsen H.B."/>
            <person name="Ramadhin A.R."/>
            <person name="Dekkers D.H.W."/>
            <person name="Wienecke H.L."/>
            <person name="Demmers J.J.P.G."/>
            <person name="Raams A."/>
            <person name="Davo-Martinez C."/>
            <person name="Llerena Schiffmacher D.A."/>
            <person name="van Toorn M."/>
            <person name="Haeckes D."/>
            <person name="Thijssen K.L."/>
            <person name="Zhou D."/>
            <person name="Lammers J.G."/>
            <person name="Pines A."/>
            <person name="Vermeulen W."/>
            <person name="Pothof J."/>
            <person name="Demmers J.A.A."/>
            <person name="van den Berg D.L.C."/>
            <person name="Lans H."/>
            <person name="Marteijn J.A."/>
        </authorList>
    </citation>
    <scope>FUNCTION</scope>
</reference>
<reference key="45">
    <citation type="journal article" date="2024" name="Nat. Cell Biol.">
        <title>Transcription-coupled repair of DNA-protein cross-links depends on CSA and CSB.</title>
        <authorList>
            <person name="Carnie C.J."/>
            <person name="Acampora A.C."/>
            <person name="Bader A.S."/>
            <person name="Erdenebat C."/>
            <person name="Zhao S."/>
            <person name="Bitensky E."/>
            <person name="van den Heuvel D."/>
            <person name="Parnas A."/>
            <person name="Gupta V."/>
            <person name="D'Alessandro G."/>
            <person name="Sczaniecka-Clift M."/>
            <person name="Weickert P."/>
            <person name="Aygenli F."/>
            <person name="Goetz M.J."/>
            <person name="Cordes J."/>
            <person name="Esain-Garcia I."/>
            <person name="Melidis L."/>
            <person name="Wondergem A.P."/>
            <person name="Lam S."/>
            <person name="Robles M.S."/>
            <person name="Balasubramanian S."/>
            <person name="Adar S."/>
            <person name="Luijsterburg M.S."/>
            <person name="Jackson S.P."/>
            <person name="Stingele J."/>
        </authorList>
    </citation>
    <scope>FUNCTION</scope>
</reference>
<reference evidence="43 44 45 46 47" key="46">
    <citation type="journal article" date="2021" name="Nature">
        <title>Structural basis of human transcription-DNA repair coupling.</title>
        <authorList>
            <person name="Kokic G."/>
            <person name="Wagner F.R."/>
            <person name="Chernev A."/>
            <person name="Urlaub H."/>
            <person name="Cramer P."/>
        </authorList>
    </citation>
    <scope>STRUCTURE BY ELECTRON MICROSCOPY (2.70 ANGSTROMS) IN COMPLEX WITH UVSSA; ERCC8; DDB1 AND RNA POLYMERASE II</scope>
    <scope>FUNCTION</scope>
</reference>
<reference evidence="48" key="47">
    <citation type="journal article" date="2024" name="Nat. Struct. Mol. Biol.">
        <title>Structural basis for RNA polymerase II ubiquitylation and inactivation in transcription-coupled repair.</title>
        <authorList>
            <person name="Kokic G."/>
            <person name="Yakoub G."/>
            <person name="van den Heuvel D."/>
            <person name="Wondergem A.P."/>
            <person name="van der Meer P.J."/>
            <person name="van der Weegen Y."/>
            <person name="Chernev A."/>
            <person name="Fianu I."/>
            <person name="Fokkens T.J."/>
            <person name="Lorenz S."/>
            <person name="Urlaub H."/>
            <person name="Cramer P."/>
            <person name="Luijsterburg M.S."/>
        </authorList>
    </citation>
    <scope>STRUCTURE BY ELECTRON MICROSCOPY (2.60 ANGSTROMS)</scope>
</reference>
<reference key="48">
    <citation type="journal article" date="1998" name="Am. J. Hum. Genet.">
        <title>Molecular analysis of mutations in the CSB (ERCC6) gene in patients with Cockayne syndrome.</title>
        <authorList>
            <person name="Mallery D.L."/>
            <person name="Tanganelli B."/>
            <person name="Colella S."/>
            <person name="Steingrimsdottir H."/>
            <person name="van Gool A.J."/>
            <person name="Troelstra C."/>
            <person name="Stefanini M."/>
            <person name="Lehmann A.R."/>
        </authorList>
    </citation>
    <scope>VARIANTS CSB TRP-670; ARG-851; GLY-957 AND LEU-1042</scope>
    <scope>VARIANTS THR-255; ASP-399; ARG-1095; VAL-1097; GLY-1213 AND ARG-1413</scope>
</reference>
<reference key="49">
    <citation type="journal article" date="2006" name="Science">
        <title>The consensus coding sequences of human breast and colorectal cancers.</title>
        <authorList>
            <person name="Sjoeblom T."/>
            <person name="Jones S."/>
            <person name="Wood L.D."/>
            <person name="Parsons D.W."/>
            <person name="Lin J."/>
            <person name="Barber T.D."/>
            <person name="Mandelker D."/>
            <person name="Leary R.J."/>
            <person name="Ptak J."/>
            <person name="Silliman N."/>
            <person name="Szabo S."/>
            <person name="Buckhaults P."/>
            <person name="Farrell C."/>
            <person name="Meeh P."/>
            <person name="Markowitz S.D."/>
            <person name="Willis J."/>
            <person name="Dawson D."/>
            <person name="Willson J.K.V."/>
            <person name="Gazdar A.F."/>
            <person name="Hartigan J."/>
            <person name="Wu L."/>
            <person name="Liu C."/>
            <person name="Parmigiani G."/>
            <person name="Park B.H."/>
            <person name="Bachman K.E."/>
            <person name="Papadopoulos N."/>
            <person name="Vogelstein B."/>
            <person name="Kinzler K.W."/>
            <person name="Velculescu V.E."/>
        </authorList>
    </citation>
    <scope>VARIANTS [LARGE SCALE ANALYSIS] ALA-591; LEU-652; THR-1038; GLN-1119 AND VAL-1119</scope>
</reference>
<reference key="50">
    <citation type="journal article" date="2008" name="Nature">
        <title>DNA sequencing of a cytogenetically normal acute myeloid leukaemia genome.</title>
        <authorList>
            <person name="Ley T.J."/>
            <person name="Mardis E.R."/>
            <person name="Ding L."/>
            <person name="Fulton B."/>
            <person name="McLellan M.D."/>
            <person name="Chen K."/>
            <person name="Dooling D."/>
            <person name="Dunford-Shore B.H."/>
            <person name="McGrath S."/>
            <person name="Hickenbotham M."/>
            <person name="Cook L."/>
            <person name="Abbott R."/>
            <person name="Larson D.E."/>
            <person name="Koboldt D.C."/>
            <person name="Pohl C."/>
            <person name="Smith S."/>
            <person name="Hawkins A."/>
            <person name="Abbott S."/>
            <person name="Locke D."/>
            <person name="Hillier L.W."/>
            <person name="Miner T."/>
            <person name="Fulton L."/>
            <person name="Magrini V."/>
            <person name="Wylie T."/>
            <person name="Glasscock J."/>
            <person name="Conyers J."/>
            <person name="Sander N."/>
            <person name="Shi X."/>
            <person name="Osborne J.R."/>
            <person name="Minx P."/>
            <person name="Gordon D."/>
            <person name="Chinwalla A."/>
            <person name="Zhao Y."/>
            <person name="Ries R.E."/>
            <person name="Payton J.E."/>
            <person name="Westervelt P."/>
            <person name="Tomasson M.H."/>
            <person name="Watson M."/>
            <person name="Baty J."/>
            <person name="Ivanovich J."/>
            <person name="Heath S."/>
            <person name="Shannon W.D."/>
            <person name="Nagarajan R."/>
            <person name="Walter M.J."/>
            <person name="Link D.C."/>
            <person name="Graubert T.A."/>
            <person name="DiPersio J.F."/>
            <person name="Wilson R.K."/>
        </authorList>
    </citation>
    <scope>VARIANT [LARGE SCALE ANALYSIS] TRP-134</scope>
</reference>
<reference key="51">
    <citation type="journal article" date="2010" name="Hum. Mutat.">
        <title>Mutation update for the CSB/ERCC6 and CSA/ERCC8 genes involved in Cockayne syndrome.</title>
        <authorList>
            <person name="Laugel V."/>
            <person name="Dalloz C."/>
            <person name="Durand M."/>
            <person name="Sauvanaud F."/>
            <person name="Kristensen U."/>
            <person name="Vincent M.C."/>
            <person name="Pasquier L."/>
            <person name="Odent S."/>
            <person name="Cormier-Daire V."/>
            <person name="Gener B."/>
            <person name="Tobias E.S."/>
            <person name="Tolmie J.L."/>
            <person name="Martin-Coignard D."/>
            <person name="Drouin-Garraud V."/>
            <person name="Heron D."/>
            <person name="Journel H."/>
            <person name="Raffo E."/>
            <person name="Vigneron J."/>
            <person name="Lyonnet S."/>
            <person name="Murday V."/>
            <person name="Gubser-Mercati D."/>
            <person name="Funalot B."/>
            <person name="Brueton L."/>
            <person name="Sanchez Del Pozo J."/>
            <person name="Munoz E."/>
            <person name="Gennery A.R."/>
            <person name="Salih M."/>
            <person name="Noruzinia M."/>
            <person name="Prescott K."/>
            <person name="Ramos L."/>
            <person name="Stark Z."/>
            <person name="Fieggen K."/>
            <person name="Chabrol B."/>
            <person name="Sarda P."/>
            <person name="Edery P."/>
            <person name="Bloch-Zupan A."/>
            <person name="Fawcett H."/>
            <person name="Pham D."/>
            <person name="Egly J.M."/>
            <person name="Lehmann A.R."/>
            <person name="Sarasin A."/>
            <person name="Dollfus H."/>
        </authorList>
    </citation>
    <scope>VARIANTS CSB TRP-670; ASP-680; CYS-686; LEU-687; ARG-851; GLY-957 AND LEU-1042</scope>
    <scope>VARIANTS COFS1 PRO-871 AND PRO-987</scope>
    <scope>VARIANTS ARG-1095 AND GLY-1213</scope>
</reference>
<name>ERCC6_HUMAN</name>
<comment type="function">
    <text evidence="6 8 16 20 21 22 24 25 26 28 29 30 31 32 34">Essential factor involved in transcription-coupled nucleotide excision repair (TC-NER), a process during which RNA polymerase II-blocking lesions are rapidly removed from the transcribed strand of active genes (PubMed:16246722, PubMed:20541997, PubMed:22483866, PubMed:26620705, PubMed:32355176, PubMed:34526721, PubMed:38316879, PubMed:38600235, PubMed:38600236). Plays a central role in the initiation of the TC-NER process: specifically recognizes and binds RNA polymerase II stalled at a lesion, and mediates recruitment of ERCC8/CSA, initiating DNA damage excision by TFIIH recruitment (PubMed:32355176, PubMed:34526721, PubMed:38600235, PubMed:38600236). Upon DNA-binding, it locally modifies DNA conformation by wrapping the DNA around itself, thereby modifying the interface between stalled RNA polymerase II and DNA (PubMed:15548521). Acts as a chromatin remodeler at DSBs; DNA-dependent ATPase-dependent activity is essential for this function (PubMed:16246722, PubMed:9565609). Plays an important role in regulating the choice of the DNA double-strand breaks (DSBs) repair pathway and G2/M checkpoint activation; DNA-dependent ATPase activity is essential for this function (PubMed:25820262). Regulates the DNA repair pathway choice by inhibiting non-homologous end joining (NHEJ), thereby promoting the homologous recombination (HR)-mediated repair of DSBs during the S/G2 phases of the cell cycle (PubMed:25820262). Mediates the activation of the ATM- and CHEK2-dependent DNA damage responses thus preventing premature entry of cells into mitosis following the induction of DNA DSBs (PubMed:25820262). Remodels chromatin by evicting histones from chromatin flanking DSBs, limiting RIF1 accumulation at DSBs thereby promoting BRCA1-mediated HR (PubMed:29203878). Required for stable recruitment of ELOA and CUL5 to DNA damage sites (PubMed:28292928). Also involved in UV-induced translocation of ERCC8 to the nuclear matrix (PubMed:26620705). Essential for neuronal differentiation and neuritogenesis; regulates transcription and chromatin remodeling activities required during neurogenesis (PubMed:24874740).</text>
</comment>
<comment type="catalytic activity">
    <reaction evidence="8 34">
        <text>ATP + H2O = ADP + phosphate + H(+)</text>
        <dbReference type="Rhea" id="RHEA:13065"/>
        <dbReference type="ChEBI" id="CHEBI:15377"/>
        <dbReference type="ChEBI" id="CHEBI:15378"/>
        <dbReference type="ChEBI" id="CHEBI:30616"/>
        <dbReference type="ChEBI" id="CHEBI:43474"/>
        <dbReference type="ChEBI" id="CHEBI:456216"/>
    </reaction>
</comment>
<comment type="subunit">
    <text evidence="6 7 8 9 10 19 21 23 24 25 26 27">Homodimer (PubMed:15548521, PubMed:16128801). Binds DNA (PubMed:15548521). Interacts with ERCC8 (PubMed:16751180). Interacts with RNA polymerase II; interaction is enhanced by UV irradiation (PubMed:26620705, PubMed:32142649). Component of the B-WICH complex, at least composed of SMARCA5/SNF2H, BAZ1B/WSTF, SF3B1, DEK, MYO1C, ERCC6, MYBBP1A and DDX21 (PubMed:16603771). Interacts with KIAA1530/UVSSA (PubMed:22466612). Interacts with ELOA and CUL5; the interaction is induced by DNA damaging agents or by inhibitors of RNA polymerase II elongation (PubMed:28292928). Interacts (via WHD region) with RIF1 (PubMed:29203878). Interacts with SMARCC2/BAF170, SMARCB1/BAF47 and the neuron-specific chromatin remodeling complex (nBAF complex) (PubMed:24874740). Interacts with ERCC5/XPG (via C-terminus); the interaction stimulates ERCC6/CSB binding to the DNA repair bubble and ERCC6/CSB ATPase activity (PubMed:16246722). May form a complex composed of RNA polymerase II, ERCC6/CSB and ERCC5/XPG which associates with the DNA repair bubble during transcription-coupled nucleotide excision repair (PubMed:16246722). Interacts with CAND1, CSTF1, DDX3X, DDX5, DDX17, DDX23, DHX36, HDAC1, HNRNPU, MTA2, PRPF3, PSMD3, RBBP4, SFPQ, SMARCA1, SMARCA2, TOP1, USP7, XRCC5, COPS3, COPS4, COPS6, DDX1, DDX41, GATAD2A, GATAD2B, PRPF4, PSMC5, SF3B2, CTR9, NONO, PSMD12 and TOP2A (PubMed:26030138).</text>
</comment>
<comment type="interaction">
    <interactant intactId="EBI-295284">
        <id>Q03468</id>
    </interactant>
    <interactant intactId="EBI-375543">
        <id>P00519</id>
        <label>ABL1</label>
    </interactant>
    <organismsDiffer>false</organismsDiffer>
    <experiments>8</experiments>
</comment>
<comment type="interaction">
    <interactant intactId="EBI-295284">
        <id>Q03468</id>
    </interactant>
    <interactant intactId="EBI-596556">
        <id>Q13216-1</id>
        <label>ERCC8</label>
    </interactant>
    <organismsDiffer>false</organismsDiffer>
    <experiments>2</experiments>
</comment>
<comment type="subcellular location">
    <subcellularLocation>
        <location evidence="7">Nucleus</location>
    </subcellularLocation>
    <subcellularLocation>
        <location evidence="24 28">Chromosome</location>
    </subcellularLocation>
    <text evidence="28">Recognizes and binds RNA polymerase II stalled at DNA damage sites.</text>
</comment>
<comment type="alternative products">
    <event type="alternative splicing"/>
    <isoform>
        <id>Q03468-1</id>
        <name evidence="38">CSB</name>
        <sequence type="displayed"/>
    </isoform>
    <isoform>
        <id>P0DP91-1</id>
        <id>Q03468-2</id>
        <name evidence="38">CSB-PGBD3</name>
        <sequence type="external"/>
    </isoform>
</comment>
<comment type="domain">
    <text evidence="28">The CSA-interacting motif (CIM) mediates interaction and recruitment of ERCC8/CSA.</text>
</comment>
<comment type="domain">
    <text evidence="16 24">A C-terminal ubiquitin-binding domain (UBD) is essential for transcription-coupled nucleotide excision repair activity, interaction with RNA polymerase II, association with chromatin after UV irradiation and for mediating the UV-induced translocation of ERRC8 to the nuclear matrix.</text>
</comment>
<comment type="domain">
    <text evidence="26">The N-terminal domain exerts an inhibitory effect on the helicase ATP-binding domain in such a manner that its ATPase activity is restricted (PubMed:29203878). Phosphorylation at Ser-10 and Ser-158 promotes the intramolecular interaction of the N-terminal domain with the helicase ATP-binding domain, thereby probably releasing the inhibitory effect of the N-terminal domain on its ATPase activity (PubMed:29203878).</text>
</comment>
<comment type="PTM">
    <text evidence="26">Phosphorylated in a cell cycle-dependent manner at Ser-158 by cyclin A-CDK2 and at Ser-10 by ATM in response to DNA damage (PubMed:29203878). Phosphorylation at these two sites promotes the intramolecular interaction of the N-terminal domain with the helicase ATP-binding domain, thereby probably releasing the inhibitory effect of the N-terminal domain on its ATPase activity (PubMed:29203878). Phosphorylation is essential for its chromatin remodeling activity (PubMed:29203878).</text>
</comment>
<comment type="PTM">
    <text evidence="10 16 17 18 19">Ubiquitinated at the C-terminus. Ubiquitination by the CSA complex leads to ERCC6 proteasomal degradation in a UV-dependent manner. Stabilized following interaction with KIAA1530/UVSSA, which promotes recruitment of deubiquitinating enzyme USP7, leading to deubiquitination of ERCC6 thereby preventing UV-induced degradation of ERCC6 by the proteasome.</text>
</comment>
<comment type="PTM">
    <text evidence="24">Sumoylation at Lys-205 in an UV-radiation-dependent manner is essential for its transcription-coupled nucleotide excision repair activity.</text>
</comment>
<comment type="disease" evidence="4 15 22 26 33">
    <disease id="DI-00312">
        <name>Cockayne syndrome B</name>
        <acronym>CSB</acronym>
        <description>A rare disorder characterized by cutaneous sensitivity to sunlight, abnormal and slow growth, cachectic dwarfism, progeroid appearance, progressive pigmentary retinopathy and sensorineural deafness. There is delayed neural development and severe progressive neurologic degeneration resulting in intellectual disability. Two clinical forms are recognized: in the classical form or Cockayne syndrome type 1, the symptoms are progressive and typically become apparent within the first few years or life; the less common Cockayne syndrome type 2 is characterized by more severe symptoms that manifest prenatally. Cockayne syndrome shows some overlap with certain forms of xeroderma pigmentosum. Unlike xeroderma pigmentosum, patients with Cockayne syndrome do not manifest increased freckling and other pigmentation abnormalities in the skin and have no significant increase in skin cancer.</description>
        <dbReference type="MIM" id="133540"/>
    </disease>
    <text>The disease is caused by variants affecting the gene represented in this entry.</text>
</comment>
<comment type="disease" evidence="15">
    <disease id="DI-00258">
        <name>Cerebro-oculo-facio-skeletal syndrome 1</name>
        <acronym>COFS1</acronym>
        <description>A disorder of prenatal onset characterized by microcephaly, congenital cataracts, facial dysmorphism, neurogenic arthrogryposis, growth failure and severe psychomotor retardation. COFS is considered to be part of the nucleotide-excision repair disorders spectrum that include also xeroderma pigmentosum, trichothiodystrophy and Cockayne syndrome.</description>
        <dbReference type="MIM" id="214150"/>
    </disease>
    <text>The disease is caused by variants affecting the gene represented in this entry.</text>
</comment>
<comment type="disease">
    <disease id="DI-00389">
        <name>De Sanctis-Cacchione syndrome</name>
        <acronym>DSC</acronym>
        <description>An autosomal recessive syndrome consisting of xeroderma pigmentosum associated with severe neurological and developmental involvement. In addition to the clinical signs of xeroderma pigmentosum, patients present with intellectual disability, dwarfism, gonadal hypoplasia, microcephaly and various neurologic complications of early onset.</description>
        <dbReference type="MIM" id="278800"/>
    </disease>
    <text>The disease is caused by variants affecting the gene represented in this entry.</text>
</comment>
<comment type="disease" evidence="11">
    <disease id="DI-02999">
        <name>Macular degeneration, age-related, 5</name>
        <acronym>ARMD5</acronym>
        <description>A form of age-related macular degeneration, a multifactorial eye disease and the most common cause of irreversible vision loss in the developed world. In most patients, the disease is manifest as ophthalmoscopically visible yellowish accumulations of protein and lipid that lie beneath the retinal pigment epithelium and within an elastin-containing structure known as Bruch membrane.</description>
        <dbReference type="MIM" id="613761"/>
    </disease>
    <text>Disease susceptibility is associated with variants affecting the gene represented in this entry.</text>
</comment>
<comment type="disease" evidence="5">
    <disease id="DI-02407">
        <name>UV-sensitive syndrome 1</name>
        <acronym>UVSS1</acronym>
        <description>An autosomal recessive disorder characterized by cutaneous photosensitivity and mild freckling in the absence of neurological abnormalities or skin tumors.</description>
        <dbReference type="MIM" id="600630"/>
    </disease>
    <text>The disease is caused by variants affecting the gene represented in this entry.</text>
</comment>
<comment type="similarity">
    <text evidence="39">Belongs to the SNF2/RAD54 helicase family.</text>
</comment>
<comment type="caution">
    <text evidence="41">PubMed:16916636 was retracted due to image manipulations.</text>
</comment>
<comment type="online information" name="Atlas of Genetics and Cytogenetics in Oncology and Haematology">
    <link uri="https://atlasgeneticsoncology.org/gene/302/CSB"/>
</comment>
<feature type="chain" id="PRO_0000074314" description="DNA excision repair protein ERCC-6">
    <location>
        <begin position="1"/>
        <end position="1493"/>
    </location>
</feature>
<feature type="domain" description="Helicase ATP-binding" evidence="1">
    <location>
        <begin position="519"/>
        <end position="695"/>
    </location>
</feature>
<feature type="domain" description="Helicase C-terminal" evidence="2">
    <location>
        <begin position="843"/>
        <end position="1002"/>
    </location>
</feature>
<feature type="region of interest" description="N-terminal domain; essential for its chromatin remodeling activity" evidence="26">
    <location>
        <begin position="1"/>
        <end position="510"/>
    </location>
</feature>
<feature type="region of interest" description="Disordered" evidence="3">
    <location>
        <begin position="1"/>
        <end position="39"/>
    </location>
</feature>
<feature type="region of interest" description="Disordered" evidence="3">
    <location>
        <begin position="287"/>
        <end position="323"/>
    </location>
</feature>
<feature type="region of interest" description="Disordered" evidence="3">
    <location>
        <begin position="344"/>
        <end position="453"/>
    </location>
</feature>
<feature type="region of interest" description="Disordered" evidence="3">
    <location>
        <begin position="1042"/>
        <end position="1147"/>
    </location>
</feature>
<feature type="region of interest" description="Disordered" evidence="3">
    <location>
        <begin position="1181"/>
        <end position="1247"/>
    </location>
</feature>
<feature type="region of interest" description="Disordered" evidence="3">
    <location>
        <begin position="1318"/>
        <end position="1384"/>
    </location>
</feature>
<feature type="region of interest" description="Ubiquitin-binding domain (UBD)" evidence="16">
    <location>
        <begin position="1400"/>
        <end position="1428"/>
    </location>
</feature>
<feature type="region of interest" description="Winged-helix domain (WHD)" evidence="40">
    <location>
        <begin position="1429"/>
        <end position="1493"/>
    </location>
</feature>
<feature type="region of interest" description="Essential for its interaction with RNA polymerase II, transcription-coupled nucleotide excision repair activity, association with chromatin after UV irradiation and for mediating the UV-induced translocation of ERRC8 to the nuclear matrix" evidence="24">
    <location>
        <begin position="1446"/>
        <end position="1493"/>
    </location>
</feature>
<feature type="short sequence motif" description="DEAH box" evidence="1">
    <location>
        <begin position="646"/>
        <end position="649"/>
    </location>
</feature>
<feature type="short sequence motif" description="CSA-interacting motif (CIM)" evidence="28">
    <location>
        <begin position="1386"/>
        <end position="1398"/>
    </location>
</feature>
<feature type="compositionally biased region" description="Polar residues" evidence="3">
    <location>
        <begin position="8"/>
        <end position="27"/>
    </location>
</feature>
<feature type="compositionally biased region" description="Basic and acidic residues" evidence="3">
    <location>
        <begin position="353"/>
        <end position="363"/>
    </location>
</feature>
<feature type="compositionally biased region" description="Acidic residues" evidence="3">
    <location>
        <begin position="364"/>
        <end position="392"/>
    </location>
</feature>
<feature type="compositionally biased region" description="Polar residues" evidence="3">
    <location>
        <begin position="1123"/>
        <end position="1141"/>
    </location>
</feature>
<feature type="compositionally biased region" description="Basic residues" evidence="3">
    <location>
        <begin position="1200"/>
        <end position="1210"/>
    </location>
</feature>
<feature type="compositionally biased region" description="Basic and acidic residues" evidence="3">
    <location>
        <begin position="1211"/>
        <end position="1221"/>
    </location>
</feature>
<feature type="compositionally biased region" description="Basic and acidic residues" evidence="3">
    <location>
        <begin position="1232"/>
        <end position="1247"/>
    </location>
</feature>
<feature type="compositionally biased region" description="Basic residues" evidence="3">
    <location>
        <begin position="1327"/>
        <end position="1336"/>
    </location>
</feature>
<feature type="compositionally biased region" description="Polar residues" evidence="3">
    <location>
        <begin position="1337"/>
        <end position="1351"/>
    </location>
</feature>
<feature type="compositionally biased region" description="Basic and acidic residues" evidence="3">
    <location>
        <begin position="1352"/>
        <end position="1376"/>
    </location>
</feature>
<feature type="binding site" evidence="1">
    <location>
        <begin position="532"/>
        <end position="539"/>
    </location>
    <ligand>
        <name>ATP</name>
        <dbReference type="ChEBI" id="CHEBI:30616"/>
    </ligand>
</feature>
<feature type="modified residue" description="Phosphoserine; by ATM" evidence="26">
    <location>
        <position position="10"/>
    </location>
</feature>
<feature type="modified residue" description="Phosphoserine; by CDK2" evidence="26 49 50 51 52 54">
    <location>
        <position position="158"/>
    </location>
</feature>
<feature type="modified residue" description="N6-methylated lysine; by EHMT2" evidence="13">
    <location>
        <position position="170"/>
    </location>
</feature>
<feature type="modified residue" description="N6-methylated lysine; by EHMT2" evidence="13">
    <location>
        <position position="297"/>
    </location>
</feature>
<feature type="modified residue" description="Phosphoserine" evidence="50 53">
    <location>
        <position position="429"/>
    </location>
</feature>
<feature type="modified residue" description="Phosphoserine" evidence="50 53">
    <location>
        <position position="430"/>
    </location>
</feature>
<feature type="modified residue" description="N6-methylated lysine; by EHMT2" evidence="13">
    <location>
        <position position="448"/>
    </location>
</feature>
<feature type="modified residue" description="Phosphoserine" evidence="53">
    <location>
        <position position="486"/>
    </location>
</feature>
<feature type="modified residue" description="Phosphoserine" evidence="53">
    <location>
        <position position="489"/>
    </location>
</feature>
<feature type="modified residue" description="N6-methylated lysine; by EHMT2" evidence="13">
    <location>
        <position position="1054"/>
    </location>
</feature>
<feature type="modified residue" description="Phosphoserine" evidence="50">
    <location>
        <position position="1142"/>
    </location>
</feature>
<feature type="modified residue" description="Phosphoserine" evidence="50 54">
    <location>
        <position position="1348"/>
    </location>
</feature>
<feature type="cross-link" description="Glycyl lysine isopeptide (Lys-Gly) (interchain with G-Cter in SUMO3)" evidence="24">
    <location>
        <position position="205"/>
    </location>
</feature>
<feature type="cross-link" description="Glycyl lysine isopeptide (Lys-Gly) (interchain with G-Cter in SUMO2)" evidence="55">
    <location>
        <position position="255"/>
    </location>
</feature>
<feature type="sequence variant" id="VAR_054153" description="In dbSNP:rs148095899." evidence="14">
    <original>R</original>
    <variation>W</variation>
    <location>
        <position position="134"/>
    </location>
</feature>
<feature type="sequence variant" id="VAR_001216" evidence="33">
    <original>K</original>
    <variation>T</variation>
    <location>
        <position position="255"/>
    </location>
</feature>
<feature type="sequence variant" id="VAR_001217" description="In dbSNP:rs2228528." evidence="33 35">
    <original>G</original>
    <variation>D</variation>
    <location>
        <position position="399"/>
    </location>
</feature>
<feature type="sequence variant" id="VAR_016301" description="In dbSNP:rs4253046." evidence="35">
    <original>D</original>
    <variation>A</variation>
    <location>
        <position position="425"/>
    </location>
</feature>
<feature type="sequence variant" id="VAR_016302" description="In dbSNP:rs4253047." evidence="35">
    <original>G</original>
    <variation>D</variation>
    <location>
        <position position="446"/>
    </location>
</feature>
<feature type="sequence variant" id="VAR_036021" description="In a colorectal cancer sample; somatic mutation; dbSNP:rs1184760254." evidence="12">
    <original>P</original>
    <variation>A</variation>
    <location>
        <position position="591"/>
    </location>
</feature>
<feature type="sequence variant" id="VAR_036022" description="In a colorectal cancer sample; somatic mutation; dbSNP:rs1365187961." evidence="12">
    <original>R</original>
    <variation>L</variation>
    <location>
        <position position="652"/>
    </location>
</feature>
<feature type="sequence variant" id="VAR_001218" description="In CSB; dbSNP:rs202080674." evidence="15 33">
    <original>R</original>
    <variation>W</variation>
    <location>
        <position position="670"/>
    </location>
</feature>
<feature type="sequence variant" id="VAR_063511" description="In CSB; dbSNP:rs1554788393." evidence="15">
    <original>N</original>
    <variation>D</variation>
    <location>
        <position position="680"/>
    </location>
</feature>
<feature type="sequence variant" id="VAR_063512" description="In CSB; dbSNP:rs751292948." evidence="15">
    <original>W</original>
    <variation>C</variation>
    <location>
        <position position="686"/>
    </location>
</feature>
<feature type="sequence variant" id="VAR_063513" description="In CSB; dbSNP:rs1026438103." evidence="15">
    <original>S</original>
    <variation>L</variation>
    <location>
        <position position="687"/>
    </location>
</feature>
<feature type="sequence variant" id="VAR_001219" description="In CSB; DNA-dependent ATPase-dead mutant; loss of chromatin remodeling activity; loss of its ability to inhibit non-homologous end joining-mediated repair and promote homologous recombination-mediated repair of DNA double-strand breaks; loss of its ability to suppress premature exit from G2/M checkpoint; abrogation of its UV-induced chromatin association; dbSNP:rs368728467." evidence="15 22 26 33">
    <original>W</original>
    <variation>R</variation>
    <location>
        <position position="851"/>
    </location>
</feature>
<feature type="sequence variant" id="VAR_063514" description="In COFS1." evidence="15">
    <original>L</original>
    <variation>P</variation>
    <location>
        <position position="871"/>
    </location>
</feature>
<feature type="sequence variant" id="VAR_016303" description="In dbSNP:rs2228525." evidence="35">
    <original>T</original>
    <variation>M</variation>
    <location>
        <position position="942"/>
    </location>
</feature>
<feature type="sequence variant" id="VAR_001220" description="In CSB; dbSNP:rs1850797114." evidence="15 33">
    <original>V</original>
    <variation>G</variation>
    <location>
        <position position="957"/>
    </location>
</feature>
<feature type="sequence variant" id="VAR_063515" description="In COFS1; dbSNP:rs121917905." evidence="15">
    <original>L</original>
    <variation>P</variation>
    <location>
        <position position="987"/>
    </location>
</feature>
<feature type="sequence variant" id="VAR_016304" description="In dbSNP:rs4253206." evidence="35">
    <original>Y</original>
    <variation>C</variation>
    <location>
        <position position="1002"/>
    </location>
</feature>
<feature type="sequence variant" id="VAR_036023" description="In a breast cancer sample; somatic mutation." evidence="12">
    <original>R</original>
    <variation>T</variation>
    <location>
        <position position="1038"/>
    </location>
</feature>
<feature type="sequence variant" id="VAR_001221" description="In CSB." evidence="15 33">
    <original>P</original>
    <variation>L</variation>
    <location>
        <position position="1042"/>
    </location>
</feature>
<feature type="sequence variant" id="VAR_001222" description="In dbSNP:rs4253208." evidence="15 33 35">
    <original>P</original>
    <variation>R</variation>
    <location>
        <position position="1095"/>
    </location>
</feature>
<feature type="sequence variant" id="VAR_001223" description="In dbSNP:rs2228526." evidence="33 35">
    <original>M</original>
    <variation>V</variation>
    <location>
        <position position="1097"/>
    </location>
</feature>
<feature type="sequence variant" id="VAR_036024" description="In a breast cancer sample; somatic mutation." evidence="12">
    <original>E</original>
    <variation>Q</variation>
    <location>
        <position position="1119"/>
    </location>
</feature>
<feature type="sequence variant" id="VAR_036025" description="In a breast cancer sample; somatic mutation." evidence="12">
    <original>E</original>
    <variation>V</variation>
    <location>
        <position position="1119"/>
    </location>
</feature>
<feature type="sequence variant" id="VAR_001224" description="In dbSNP:rs2228527." evidence="15 33 35">
    <original>R</original>
    <variation>G</variation>
    <location>
        <position position="1213"/>
    </location>
</feature>
<feature type="sequence variant" id="VAR_037436" description="In dbSNP:rs34704611.">
    <original>T</original>
    <variation>I</variation>
    <location>
        <position position="1220"/>
    </location>
</feature>
<feature type="sequence variant" id="VAR_016305" description="In dbSNP:rs4253211." evidence="35">
    <original>R</original>
    <variation>P</variation>
    <location>
        <position position="1230"/>
    </location>
</feature>
<feature type="sequence variant" id="VAR_016306" description="In dbSNP:rs2229761." evidence="35">
    <original>V</original>
    <variation>L</variation>
    <location>
        <position position="1308"/>
    </location>
</feature>
<feature type="sequence variant" id="VAR_016307" description="In dbSNP:rs4253219." evidence="35">
    <original>G</original>
    <variation>V</variation>
    <location>
        <position position="1322"/>
    </location>
</feature>
<feature type="sequence variant" id="VAR_037437" description="In dbSNP:rs34917815.">
    <original>D</original>
    <variation>E</variation>
    <location>
        <position position="1355"/>
    </location>
</feature>
<feature type="sequence variant" id="VAR_016308" description="In dbSNP:rs4253227." evidence="35">
    <original>G</original>
    <variation>R</variation>
    <location>
        <position position="1372"/>
    </location>
</feature>
<feature type="sequence variant" id="VAR_016309" description="In dbSNP:rs4253228." evidence="35">
    <original>G</original>
    <variation>R</variation>
    <location>
        <position position="1382"/>
    </location>
</feature>
<feature type="sequence variant" id="VAR_016310" description="In dbSNP:rs4253229." evidence="35">
    <original>G</original>
    <variation>R</variation>
    <location>
        <position position="1410"/>
    </location>
</feature>
<feature type="sequence variant" id="VAR_001225" description="In dbSNP:rs2228529." evidence="33 35">
    <original>Q</original>
    <variation>R</variation>
    <location>
        <position position="1413"/>
    </location>
</feature>
<feature type="sequence variant" id="VAR_016311" description="In dbSNP:rs4253230." evidence="35">
    <original>T</original>
    <variation>I</variation>
    <location>
        <position position="1441"/>
    </location>
</feature>
<feature type="mutagenesis site" description="Non-phosphorylatable by ATM. Loss of chromatin remodeling activity and its ability to promote the intramolecular interaction of the N-terminal domain with the helicase ATP-binding domain." evidence="26">
    <original>S</original>
    <variation>A</variation>
    <location>
        <position position="10"/>
    </location>
</feature>
<feature type="mutagenesis site" description="Phosphomimetic mutant. No loss of chromatin remodeling activity and its ability to promote the intramolecular interaction of the N-terminal domain with the helicase ATP-binding domain." evidence="26">
    <original>S</original>
    <variation>D</variation>
    <location>
        <position position="10"/>
    </location>
</feature>
<feature type="mutagenesis site" description="Non-phosphorylatable by CDK2. Loss of chromatin remodeling activity and its ability to promote the intramolecular interaction of the N-terminal domain with the helicase ATP-binding domain." evidence="26">
    <original>S</original>
    <variation>A</variation>
    <location>
        <position position="158"/>
    </location>
</feature>
<feature type="mutagenesis site" description="Phosphomimetic mutant. No loss of chromatin remodeling activity and its ability to promote the intramolecular interaction of the N-terminal domain with the helicase ATP-binding domain." evidence="26">
    <original>S</original>
    <variation>D</variation>
    <location>
        <position position="158"/>
    </location>
</feature>
<feature type="mutagenesis site" description="Loss of sumoylation and defects in transcription-coupled nucleotide excision repair." evidence="24">
    <original>K</original>
    <variation>R</variation>
    <location>
        <position position="205"/>
    </location>
</feature>
<feature type="mutagenesis site" description="Abolished ATPase activity without abolishing ability to promote transcription-coupled nucleotide excision repair (TC-NER)." evidence="34">
    <original>K</original>
    <variation>R</variation>
    <location>
        <position position="538"/>
    </location>
</feature>
<feature type="mutagenesis site" description="Abolished interaction with ERCC8/CSA and ERCC8/CSA recruitmentto DNA damage sites." evidence="28">
    <location>
        <begin position="1385"/>
        <end position="1399"/>
    </location>
</feature>
<feature type="mutagenesis site" description="Fails to bind polyubiquitin chains." evidence="16">
    <original>LL</original>
    <variation>GG</variation>
    <location>
        <begin position="1427"/>
        <end position="1428"/>
    </location>
</feature>
<feature type="mutagenesis site" description="No loss of sumoylation; when associated with R-1487 and R-1489." evidence="24">
    <original>K</original>
    <variation>R</variation>
    <location>
        <position position="1457"/>
    </location>
</feature>
<feature type="mutagenesis site" description="Loss of interaction with RIF1; when associated with G-1486 and G-1488." evidence="26">
    <original>L</original>
    <variation>G</variation>
    <location>
        <position position="1470"/>
    </location>
</feature>
<feature type="mutagenesis site" description="Loss of interaction with RIF1; when associated with G-1470 and G-1488." evidence="26">
    <original>W</original>
    <variation>G</variation>
    <location>
        <position position="1486"/>
    </location>
</feature>
<feature type="mutagenesis site" description="No loss of sumoylation; when associated with R-1457 and R-1489. No loss of sumoylation; when associated with R-1489." evidence="24">
    <original>K</original>
    <variation>R</variation>
    <location>
        <position position="1487"/>
    </location>
</feature>
<feature type="mutagenesis site" description="Loss of interaction with RIF1; when associated with G-1470 and G-1486." evidence="26">
    <original>L</original>
    <variation>G</variation>
    <location>
        <position position="1488"/>
    </location>
</feature>
<feature type="mutagenesis site" description="No loss of sumoylation; when associated with R-1457 and R-1487. No loss of sumoylation; when associated with R-1487." evidence="24">
    <original>K</original>
    <variation>R</variation>
    <location>
        <position position="1489"/>
    </location>
</feature>
<feature type="helix" evidence="56">
    <location>
        <begin position="93"/>
        <end position="96"/>
    </location>
</feature>
<feature type="helix" evidence="56">
    <location>
        <begin position="102"/>
        <end position="104"/>
    </location>
</feature>
<feature type="helix" evidence="56">
    <location>
        <begin position="109"/>
        <end position="155"/>
    </location>
</feature>
<feature type="helix" evidence="59">
    <location>
        <begin position="459"/>
        <end position="475"/>
    </location>
</feature>
<feature type="strand" evidence="58">
    <location>
        <begin position="494"/>
        <end position="496"/>
    </location>
</feature>
<feature type="helix" evidence="59">
    <location>
        <begin position="501"/>
        <end position="504"/>
    </location>
</feature>
<feature type="helix" evidence="59">
    <location>
        <begin position="509"/>
        <end position="524"/>
    </location>
</feature>
<feature type="strand" evidence="59">
    <location>
        <begin position="528"/>
        <end position="530"/>
    </location>
</feature>
<feature type="helix" evidence="59">
    <location>
        <begin position="538"/>
        <end position="552"/>
    </location>
</feature>
<feature type="strand" evidence="58">
    <location>
        <begin position="564"/>
        <end position="566"/>
    </location>
</feature>
<feature type="strand" evidence="59">
    <location>
        <begin position="569"/>
        <end position="572"/>
    </location>
</feature>
<feature type="helix" evidence="59">
    <location>
        <begin position="575"/>
        <end position="577"/>
    </location>
</feature>
<feature type="helix" evidence="59">
    <location>
        <begin position="578"/>
        <end position="588"/>
    </location>
</feature>
<feature type="strand" evidence="59">
    <location>
        <begin position="594"/>
        <end position="598"/>
    </location>
</feature>
<feature type="strand" evidence="60">
    <location>
        <begin position="602"/>
        <end position="605"/>
    </location>
</feature>
<feature type="helix" evidence="59">
    <location>
        <begin position="607"/>
        <end position="616"/>
    </location>
</feature>
<feature type="strand" evidence="59">
    <location>
        <begin position="620"/>
        <end position="623"/>
    </location>
</feature>
<feature type="helix" evidence="59">
    <location>
        <begin position="625"/>
        <end position="630"/>
    </location>
</feature>
<feature type="helix" evidence="59">
    <location>
        <begin position="632"/>
        <end position="636"/>
    </location>
</feature>
<feature type="strand" evidence="59">
    <location>
        <begin position="641"/>
        <end position="646"/>
    </location>
</feature>
<feature type="helix" evidence="59">
    <location>
        <begin position="648"/>
        <end position="651"/>
    </location>
</feature>
<feature type="strand" evidence="57">
    <location>
        <begin position="654"/>
        <end position="656"/>
    </location>
</feature>
<feature type="helix" evidence="59">
    <location>
        <begin position="657"/>
        <end position="662"/>
    </location>
</feature>
<feature type="strand" evidence="59">
    <location>
        <begin position="670"/>
        <end position="673"/>
    </location>
</feature>
<feature type="strand" evidence="58">
    <location>
        <begin position="679"/>
        <end position="681"/>
    </location>
</feature>
<feature type="helix" evidence="59">
    <location>
        <begin position="682"/>
        <end position="692"/>
    </location>
</feature>
<feature type="turn" evidence="60">
    <location>
        <begin position="694"/>
        <end position="696"/>
    </location>
</feature>
<feature type="helix" evidence="59">
    <location>
        <begin position="700"/>
        <end position="706"/>
    </location>
</feature>
<feature type="helix" evidence="59">
    <location>
        <begin position="708"/>
        <end position="712"/>
    </location>
</feature>
<feature type="helix" evidence="59">
    <location>
        <begin position="721"/>
        <end position="738"/>
    </location>
</feature>
<feature type="helix" evidence="59">
    <location>
        <begin position="739"/>
        <end position="741"/>
    </location>
</feature>
<feature type="helix" evidence="59">
    <location>
        <begin position="747"/>
        <end position="749"/>
    </location>
</feature>
<feature type="turn" evidence="58">
    <location>
        <begin position="752"/>
        <end position="754"/>
    </location>
</feature>
<feature type="strand" evidence="59">
    <location>
        <begin position="759"/>
        <end position="766"/>
    </location>
</feature>
<feature type="helix" evidence="59">
    <location>
        <begin position="770"/>
        <end position="780"/>
    </location>
</feature>
<feature type="helix" evidence="59">
    <location>
        <begin position="783"/>
        <end position="789"/>
    </location>
</feature>
<feature type="helix" evidence="59">
    <location>
        <begin position="796"/>
        <end position="807"/>
    </location>
</feature>
<feature type="helix" evidence="59">
    <location>
        <begin position="809"/>
        <end position="813"/>
    </location>
</feature>
<feature type="helix" evidence="59">
    <location>
        <begin position="824"/>
        <end position="826"/>
    </location>
</feature>
<feature type="turn" evidence="59">
    <location>
        <begin position="827"/>
        <end position="830"/>
    </location>
</feature>
<feature type="helix" evidence="59">
    <location>
        <begin position="835"/>
        <end position="837"/>
    </location>
</feature>
<feature type="helix" evidence="59">
    <location>
        <begin position="839"/>
        <end position="854"/>
    </location>
</feature>
<feature type="strand" evidence="59">
    <location>
        <begin position="858"/>
        <end position="863"/>
    </location>
</feature>
<feature type="helix" evidence="59">
    <location>
        <begin position="865"/>
        <end position="877"/>
    </location>
</feature>
<feature type="strand" evidence="59">
    <location>
        <begin position="882"/>
        <end position="885"/>
    </location>
</feature>
<feature type="helix" evidence="59">
    <location>
        <begin position="891"/>
        <end position="903"/>
    </location>
</feature>
<feature type="strand" evidence="59">
    <location>
        <begin position="909"/>
        <end position="915"/>
    </location>
</feature>
<feature type="strand" evidence="58">
    <location>
        <begin position="918"/>
        <end position="920"/>
    </location>
</feature>
<feature type="strand" evidence="59">
    <location>
        <begin position="928"/>
        <end position="931"/>
    </location>
</feature>
<feature type="helix" evidence="59">
    <location>
        <begin position="938"/>
        <end position="945"/>
    </location>
</feature>
<feature type="turn" evidence="59">
    <location>
        <begin position="946"/>
        <end position="948"/>
    </location>
</feature>
<feature type="strand" evidence="59">
    <location>
        <begin position="957"/>
        <end position="964"/>
    </location>
</feature>
<feature type="helix" evidence="59">
    <location>
        <begin position="968"/>
        <end position="987"/>
    </location>
</feature>
<feature type="helix" evidence="59">
    <location>
        <begin position="998"/>
        <end position="1001"/>
    </location>
</feature>
<feature type="strand" evidence="57">
    <location>
        <begin position="1012"/>
        <end position="1014"/>
    </location>
</feature>
<feature type="helix" evidence="59">
    <location>
        <begin position="1017"/>
        <end position="1021"/>
    </location>
</feature>
<feature type="turn" evidence="59">
    <location>
        <begin position="1022"/>
        <end position="1024"/>
    </location>
</feature>
<feature type="helix" evidence="59">
    <location>
        <begin position="1247"/>
        <end position="1257"/>
    </location>
</feature>
<feature type="strand" evidence="59">
    <location>
        <begin position="1261"/>
        <end position="1267"/>
    </location>
</feature>
<feature type="helix" evidence="59">
    <location>
        <begin position="1268"/>
        <end position="1271"/>
    </location>
</feature>
<feature type="strand" evidence="59">
    <location>
        <begin position="1331"/>
        <end position="1335"/>
    </location>
</feature>
<feature type="helix" evidence="59">
    <location>
        <begin position="1386"/>
        <end position="1397"/>
    </location>
</feature>
<dbReference type="EC" id="3.6.4.-" evidence="8 34"/>
<dbReference type="EMBL" id="L04791">
    <property type="protein sequence ID" value="AAA52397.1"/>
    <property type="molecule type" value="mRNA"/>
</dbReference>
<dbReference type="EMBL" id="AY204752">
    <property type="protein sequence ID" value="AAO13487.1"/>
    <property type="molecule type" value="Genomic_DNA"/>
</dbReference>
<dbReference type="EMBL" id="AC073366">
    <property type="status" value="NOT_ANNOTATED_CDS"/>
    <property type="molecule type" value="Genomic_DNA"/>
</dbReference>
<dbReference type="EMBL" id="AL138760">
    <property type="status" value="NOT_ANNOTATED_CDS"/>
    <property type="molecule type" value="Genomic_DNA"/>
</dbReference>
<dbReference type="EMBL" id="CH471187">
    <property type="protein sequence ID" value="EAW93094.1"/>
    <property type="molecule type" value="Genomic_DNA"/>
</dbReference>
<dbReference type="EMBL" id="CH471187">
    <property type="protein sequence ID" value="EAW93097.1"/>
    <property type="molecule type" value="Genomic_DNA"/>
</dbReference>
<dbReference type="CCDS" id="CCDS7229.1">
    <molecule id="Q03468-1"/>
</dbReference>
<dbReference type="PIR" id="A44224">
    <property type="entry name" value="A44224"/>
</dbReference>
<dbReference type="RefSeq" id="NP_000115.1">
    <molecule id="Q03468-1"/>
    <property type="nucleotide sequence ID" value="NM_000124.4"/>
</dbReference>
<dbReference type="RefSeq" id="NP_001333369.1">
    <molecule id="Q03468-1"/>
    <property type="nucleotide sequence ID" value="NM_001346440.2"/>
</dbReference>
<dbReference type="PDB" id="4CVO">
    <property type="method" value="X-ray"/>
    <property type="resolution" value="1.85 A"/>
    <property type="chains" value="A=84-160"/>
</dbReference>
<dbReference type="PDB" id="7OO3">
    <property type="method" value="EM"/>
    <property type="resolution" value="2.80 A"/>
    <property type="chains" value="b=1-1493"/>
</dbReference>
<dbReference type="PDB" id="7OOB">
    <property type="method" value="EM"/>
    <property type="resolution" value="2.70 A"/>
    <property type="chains" value="b=1-1493"/>
</dbReference>
<dbReference type="PDB" id="7OOP">
    <property type="method" value="EM"/>
    <property type="resolution" value="2.90 A"/>
    <property type="chains" value="b=1-1493"/>
</dbReference>
<dbReference type="PDB" id="7OPC">
    <property type="method" value="EM"/>
    <property type="resolution" value="3.00 A"/>
    <property type="chains" value="b=1-1493"/>
</dbReference>
<dbReference type="PDB" id="7OPD">
    <property type="method" value="EM"/>
    <property type="resolution" value="3.00 A"/>
    <property type="chains" value="b=1-1493"/>
</dbReference>
<dbReference type="PDB" id="8B3D">
    <property type="method" value="EM"/>
    <property type="resolution" value="2.60 A"/>
    <property type="chains" value="b=1-1493"/>
</dbReference>
<dbReference type="PDB" id="8B3F">
    <property type="method" value="EM"/>
    <property type="resolution" value="3.10 A"/>
    <property type="chains" value="b=1-1493"/>
</dbReference>
<dbReference type="PDB" id="9BZ0">
    <property type="method" value="EM"/>
    <property type="resolution" value="1.90 A"/>
    <property type="chains" value="b=1-1493"/>
</dbReference>
<dbReference type="PDB" id="9ER2">
    <property type="method" value="EM"/>
    <property type="resolution" value="3.30 A"/>
    <property type="chains" value="b=1-1493"/>
</dbReference>
<dbReference type="PDB" id="9FD2">
    <property type="method" value="EM"/>
    <property type="resolution" value="3.40 A"/>
    <property type="chains" value="e=1-1493"/>
</dbReference>
<dbReference type="PDBsum" id="4CVO"/>
<dbReference type="PDBsum" id="7OO3"/>
<dbReference type="PDBsum" id="7OOB"/>
<dbReference type="PDBsum" id="7OOP"/>
<dbReference type="PDBsum" id="7OPC"/>
<dbReference type="PDBsum" id="7OPD"/>
<dbReference type="PDBsum" id="8B3D"/>
<dbReference type="PDBsum" id="8B3F"/>
<dbReference type="PDBsum" id="9BZ0"/>
<dbReference type="PDBsum" id="9ER2"/>
<dbReference type="PDBsum" id="9FD2"/>
<dbReference type="EMDB" id="EMD-13004"/>
<dbReference type="EMDB" id="EMD-13009"/>
<dbReference type="EMDB" id="EMD-13010"/>
<dbReference type="EMDB" id="EMD-13015"/>
<dbReference type="EMDB" id="EMD-13016"/>
<dbReference type="EMDB" id="EMD-15825"/>
<dbReference type="EMDB" id="EMD-15826"/>
<dbReference type="EMDB" id="EMD-19909"/>
<dbReference type="EMDB" id="EMD-45050"/>
<dbReference type="EMDB" id="EMD-50292"/>
<dbReference type="EMDB" id="EMD-50306"/>
<dbReference type="EMDB" id="EMD-50325"/>
<dbReference type="SMR" id="Q03468"/>
<dbReference type="BioGRID" id="108386">
    <property type="interactions" value="235"/>
</dbReference>
<dbReference type="ComplexPortal" id="CPX-1099">
    <property type="entry name" value="B-WICH chromatin remodelling complex"/>
</dbReference>
<dbReference type="CORUM" id="Q03468"/>
<dbReference type="DIP" id="DIP-193N"/>
<dbReference type="FunCoup" id="Q03468">
    <property type="interactions" value="3124"/>
</dbReference>
<dbReference type="IntAct" id="Q03468">
    <property type="interactions" value="27"/>
</dbReference>
<dbReference type="MINT" id="Q03468"/>
<dbReference type="STRING" id="9606.ENSP00000348089"/>
<dbReference type="GlyGen" id="Q03468">
    <property type="glycosylation" value="2 sites, 1 O-linked glycan (1 site)"/>
</dbReference>
<dbReference type="iPTMnet" id="Q03468"/>
<dbReference type="PhosphoSitePlus" id="Q03468"/>
<dbReference type="BioMuta" id="ERCC6"/>
<dbReference type="DMDM" id="416959"/>
<dbReference type="jPOST" id="Q03468"/>
<dbReference type="MassIVE" id="Q03468"/>
<dbReference type="PaxDb" id="9606-ENSP00000348089"/>
<dbReference type="PeptideAtlas" id="Q03468"/>
<dbReference type="ProteomicsDB" id="18566"/>
<dbReference type="ProteomicsDB" id="58213"/>
<dbReference type="Pumba" id="Q03468"/>
<dbReference type="Antibodypedia" id="34972">
    <property type="antibodies" value="410 antibodies from 35 providers"/>
</dbReference>
<dbReference type="DNASU" id="2074"/>
<dbReference type="Ensembl" id="ENST00000355832.10">
    <molecule id="Q03468-1"/>
    <property type="protein sequence ID" value="ENSP00000348089.5"/>
    <property type="gene ID" value="ENSG00000225830.16"/>
</dbReference>
<dbReference type="GeneID" id="2074"/>
<dbReference type="KEGG" id="hsa:2074"/>
<dbReference type="MANE-Select" id="ENST00000355832.10">
    <property type="protein sequence ID" value="ENSP00000348089.5"/>
    <property type="RefSeq nucleotide sequence ID" value="NM_000124.4"/>
    <property type="RefSeq protein sequence ID" value="NP_000115.1"/>
</dbReference>
<dbReference type="UCSC" id="uc001jhs.6">
    <molecule id="Q03468-1"/>
    <property type="organism name" value="human"/>
</dbReference>
<dbReference type="UCSC" id="uc001jhu.4">
    <property type="organism name" value="human"/>
</dbReference>
<dbReference type="AGR" id="HGNC:3438"/>
<dbReference type="CTD" id="2074"/>
<dbReference type="DisGeNET" id="2074"/>
<dbReference type="GeneCards" id="ERCC6"/>
<dbReference type="GeneReviews" id="ERCC6"/>
<dbReference type="HGNC" id="HGNC:3438">
    <property type="gene designation" value="ERCC6"/>
</dbReference>
<dbReference type="HPA" id="ENSG00000225830">
    <property type="expression patterns" value="Low tissue specificity"/>
</dbReference>
<dbReference type="MalaCards" id="ERCC6"/>
<dbReference type="MIM" id="133540">
    <property type="type" value="phenotype"/>
</dbReference>
<dbReference type="MIM" id="214150">
    <property type="type" value="phenotype"/>
</dbReference>
<dbReference type="MIM" id="278800">
    <property type="type" value="phenotype"/>
</dbReference>
<dbReference type="MIM" id="600630">
    <property type="type" value="phenotype"/>
</dbReference>
<dbReference type="MIM" id="609413">
    <property type="type" value="gene"/>
</dbReference>
<dbReference type="MIM" id="613761">
    <property type="type" value="phenotype"/>
</dbReference>
<dbReference type="neXtProt" id="NX_Q03468"/>
<dbReference type="OpenTargets" id="ENSG00000225830"/>
<dbReference type="Orphanet" id="90321">
    <property type="disease" value="Cockayne syndrome type 1"/>
</dbReference>
<dbReference type="Orphanet" id="90322">
    <property type="disease" value="Cockayne syndrome type 2"/>
</dbReference>
<dbReference type="Orphanet" id="90324">
    <property type="disease" value="Cockayne syndrome type 3"/>
</dbReference>
<dbReference type="Orphanet" id="1466">
    <property type="disease" value="COFS syndrome"/>
</dbReference>
<dbReference type="Orphanet" id="178338">
    <property type="disease" value="UV-sensitive syndrome"/>
</dbReference>
<dbReference type="PharmGKB" id="PA27852"/>
<dbReference type="VEuPathDB" id="HostDB:ENSG00000225830"/>
<dbReference type="eggNOG" id="KOG0387">
    <property type="taxonomic scope" value="Eukaryota"/>
</dbReference>
<dbReference type="GeneTree" id="ENSGT00940000158057"/>
<dbReference type="HOGENOM" id="CLU_000315_7_2_1"/>
<dbReference type="InParanoid" id="Q03468"/>
<dbReference type="OMA" id="CNITPCQ"/>
<dbReference type="OrthoDB" id="413460at2759"/>
<dbReference type="PAN-GO" id="Q03468">
    <property type="GO annotations" value="3 GO annotations based on evolutionary models"/>
</dbReference>
<dbReference type="PhylomeDB" id="Q03468"/>
<dbReference type="TreeFam" id="TF101236"/>
<dbReference type="TreeFam" id="TF328011"/>
<dbReference type="PathwayCommons" id="Q03468"/>
<dbReference type="Reactome" id="R-HSA-427389">
    <property type="pathway name" value="ERCC6 (CSB) and EHMT2 (G9a) positively regulate rRNA expression"/>
</dbReference>
<dbReference type="Reactome" id="R-HSA-5250924">
    <property type="pathway name" value="B-WICH complex positively regulates rRNA expression"/>
</dbReference>
<dbReference type="Reactome" id="R-HSA-6781823">
    <property type="pathway name" value="Formation of TC-NER Pre-Incision Complex"/>
</dbReference>
<dbReference type="Reactome" id="R-HSA-6781827">
    <property type="pathway name" value="Transcription-Coupled Nucleotide Excision Repair (TC-NER)"/>
</dbReference>
<dbReference type="Reactome" id="R-HSA-6782135">
    <property type="pathway name" value="Dual incision in TC-NER"/>
</dbReference>
<dbReference type="Reactome" id="R-HSA-6782210">
    <property type="pathway name" value="Gap-filling DNA repair synthesis and ligation in TC-NER"/>
</dbReference>
<dbReference type="Reactome" id="R-HSA-73762">
    <property type="pathway name" value="RNA Polymerase I Transcription Initiation"/>
</dbReference>
<dbReference type="SignaLink" id="Q03468"/>
<dbReference type="SIGNOR" id="Q03468"/>
<dbReference type="BioGRID-ORCS" id="2074">
    <property type="hits" value="26 hits in 1139 CRISPR screens"/>
</dbReference>
<dbReference type="ChiTaRS" id="ERCC6">
    <property type="organism name" value="human"/>
</dbReference>
<dbReference type="EvolutionaryTrace" id="Q03468"/>
<dbReference type="GeneWiki" id="ERCC6"/>
<dbReference type="GenomeRNAi" id="2074"/>
<dbReference type="Pharos" id="Q03468">
    <property type="development level" value="Tbio"/>
</dbReference>
<dbReference type="PRO" id="PR:Q03468"/>
<dbReference type="Proteomes" id="UP000005640">
    <property type="component" value="Chromosome 10"/>
</dbReference>
<dbReference type="RNAct" id="Q03468">
    <property type="molecule type" value="protein"/>
</dbReference>
<dbReference type="Bgee" id="ENSG00000225830">
    <property type="expression patterns" value="Expressed in oocyte and 176 other cell types or tissues"/>
</dbReference>
<dbReference type="ExpressionAtlas" id="Q03468">
    <property type="expression patterns" value="baseline and differential"/>
</dbReference>
<dbReference type="GO" id="GO:0110016">
    <property type="term" value="C:B-WICH complex"/>
    <property type="evidence" value="ECO:0000314"/>
    <property type="project" value="ComplexPortal"/>
</dbReference>
<dbReference type="GO" id="GO:0005730">
    <property type="term" value="C:nucleolus"/>
    <property type="evidence" value="ECO:0000314"/>
    <property type="project" value="UniProtKB"/>
</dbReference>
<dbReference type="GO" id="GO:0005654">
    <property type="term" value="C:nucleoplasm"/>
    <property type="evidence" value="ECO:0000314"/>
    <property type="project" value="UniProtKB"/>
</dbReference>
<dbReference type="GO" id="GO:0005634">
    <property type="term" value="C:nucleus"/>
    <property type="evidence" value="ECO:0000314"/>
    <property type="project" value="UniProtKB"/>
</dbReference>
<dbReference type="GO" id="GO:0090734">
    <property type="term" value="C:site of DNA damage"/>
    <property type="evidence" value="ECO:0000314"/>
    <property type="project" value="UniProtKB"/>
</dbReference>
<dbReference type="GO" id="GO:0008023">
    <property type="term" value="C:transcription elongation factor complex"/>
    <property type="evidence" value="ECO:0000314"/>
    <property type="project" value="UniProtKB"/>
</dbReference>
<dbReference type="GO" id="GO:0005524">
    <property type="term" value="F:ATP binding"/>
    <property type="evidence" value="ECO:0000314"/>
    <property type="project" value="UniProtKB"/>
</dbReference>
<dbReference type="GO" id="GO:0016887">
    <property type="term" value="F:ATP hydrolysis activity"/>
    <property type="evidence" value="ECO:0007669"/>
    <property type="project" value="RHEA"/>
</dbReference>
<dbReference type="GO" id="GO:0008094">
    <property type="term" value="F:ATP-dependent activity, acting on DNA"/>
    <property type="evidence" value="ECO:0000314"/>
    <property type="project" value="UniProtKB"/>
</dbReference>
<dbReference type="GO" id="GO:0140658">
    <property type="term" value="F:ATP-dependent chromatin remodeler activity"/>
    <property type="evidence" value="ECO:0000314"/>
    <property type="project" value="UniProtKB"/>
</dbReference>
<dbReference type="GO" id="GO:0140664">
    <property type="term" value="F:ATP-dependent DNA damage sensor activity"/>
    <property type="evidence" value="ECO:0000314"/>
    <property type="project" value="UniProtKB"/>
</dbReference>
<dbReference type="GO" id="GO:0003682">
    <property type="term" value="F:chromatin binding"/>
    <property type="evidence" value="ECO:0000314"/>
    <property type="project" value="UniProtKB"/>
</dbReference>
<dbReference type="GO" id="GO:0140463">
    <property type="term" value="F:chromatin-protein adaptor activity"/>
    <property type="evidence" value="ECO:0000314"/>
    <property type="project" value="UniProtKB"/>
</dbReference>
<dbReference type="GO" id="GO:0003677">
    <property type="term" value="F:DNA binding"/>
    <property type="evidence" value="ECO:0000314"/>
    <property type="project" value="UniProtKB"/>
</dbReference>
<dbReference type="GO" id="GO:0004386">
    <property type="term" value="F:helicase activity"/>
    <property type="evidence" value="ECO:0007669"/>
    <property type="project" value="UniProtKB-KW"/>
</dbReference>
<dbReference type="GO" id="GO:0030296">
    <property type="term" value="F:protein tyrosine kinase activator activity"/>
    <property type="evidence" value="ECO:0000314"/>
    <property type="project" value="MGI"/>
</dbReference>
<dbReference type="GO" id="GO:0070063">
    <property type="term" value="F:RNA polymerase binding"/>
    <property type="evidence" value="ECO:0000314"/>
    <property type="project" value="UniProtKB"/>
</dbReference>
<dbReference type="GO" id="GO:0006284">
    <property type="term" value="P:base-excision repair"/>
    <property type="evidence" value="ECO:0000315"/>
    <property type="project" value="UniProtKB"/>
</dbReference>
<dbReference type="GO" id="GO:0006338">
    <property type="term" value="P:chromatin remodeling"/>
    <property type="evidence" value="ECO:0000303"/>
    <property type="project" value="ComplexPortal"/>
</dbReference>
<dbReference type="GO" id="GO:0000077">
    <property type="term" value="P:DNA damage checkpoint signaling"/>
    <property type="evidence" value="ECO:0000315"/>
    <property type="project" value="UniProtKB"/>
</dbReference>
<dbReference type="GO" id="GO:0042262">
    <property type="term" value="P:DNA protection"/>
    <property type="evidence" value="ECO:0007669"/>
    <property type="project" value="Ensembl"/>
</dbReference>
<dbReference type="GO" id="GO:0006281">
    <property type="term" value="P:DNA repair"/>
    <property type="evidence" value="ECO:0000315"/>
    <property type="project" value="UniProtKB"/>
</dbReference>
<dbReference type="GO" id="GO:0097680">
    <property type="term" value="P:double-strand break repair via classical nonhomologous end joining"/>
    <property type="evidence" value="ECO:0000314"/>
    <property type="project" value="UniProtKB"/>
</dbReference>
<dbReference type="GO" id="GO:0008630">
    <property type="term" value="P:intrinsic apoptotic signaling pathway in response to DNA damage"/>
    <property type="evidence" value="ECO:0007669"/>
    <property type="project" value="Ensembl"/>
</dbReference>
<dbReference type="GO" id="GO:0007254">
    <property type="term" value="P:JNK cascade"/>
    <property type="evidence" value="ECO:0007669"/>
    <property type="project" value="Ensembl"/>
</dbReference>
<dbReference type="GO" id="GO:0035264">
    <property type="term" value="P:multicellular organism growth"/>
    <property type="evidence" value="ECO:0007669"/>
    <property type="project" value="Ensembl"/>
</dbReference>
<dbReference type="GO" id="GO:2001033">
    <property type="term" value="P:negative regulation of double-strand break repair via nonhomologous end joining"/>
    <property type="evidence" value="ECO:0000315"/>
    <property type="project" value="UniProtKB"/>
</dbReference>
<dbReference type="GO" id="GO:0022008">
    <property type="term" value="P:neurogenesis"/>
    <property type="evidence" value="ECO:0000315"/>
    <property type="project" value="UniProtKB"/>
</dbReference>
<dbReference type="GO" id="GO:0030182">
    <property type="term" value="P:neuron differentiation"/>
    <property type="evidence" value="ECO:0000315"/>
    <property type="project" value="UniProtKB"/>
</dbReference>
<dbReference type="GO" id="GO:0031175">
    <property type="term" value="P:neuron projection development"/>
    <property type="evidence" value="ECO:0000315"/>
    <property type="project" value="UniProtKB"/>
</dbReference>
<dbReference type="GO" id="GO:0045494">
    <property type="term" value="P:photoreceptor cell maintenance"/>
    <property type="evidence" value="ECO:0007669"/>
    <property type="project" value="Ensembl"/>
</dbReference>
<dbReference type="GO" id="GO:0045739">
    <property type="term" value="P:positive regulation of DNA repair"/>
    <property type="evidence" value="ECO:0000315"/>
    <property type="project" value="UniProtKB"/>
</dbReference>
<dbReference type="GO" id="GO:0032786">
    <property type="term" value="P:positive regulation of DNA-templated transcription, elongation"/>
    <property type="evidence" value="ECO:0000314"/>
    <property type="project" value="UniProtKB"/>
</dbReference>
<dbReference type="GO" id="GO:1905168">
    <property type="term" value="P:positive regulation of double-strand break repair via homologous recombination"/>
    <property type="evidence" value="ECO:0000315"/>
    <property type="project" value="UniProtKB"/>
</dbReference>
<dbReference type="GO" id="GO:0045943">
    <property type="term" value="P:positive regulation of transcription by RNA polymerase I"/>
    <property type="evidence" value="ECO:0000303"/>
    <property type="project" value="ComplexPortal"/>
</dbReference>
<dbReference type="GO" id="GO:0045944">
    <property type="term" value="P:positive regulation of transcription by RNA polymerase II"/>
    <property type="evidence" value="ECO:0000303"/>
    <property type="project" value="ComplexPortal"/>
</dbReference>
<dbReference type="GO" id="GO:0045945">
    <property type="term" value="P:positive regulation of transcription by RNA polymerase III"/>
    <property type="evidence" value="ECO:0000314"/>
    <property type="project" value="ComplexPortal"/>
</dbReference>
<dbReference type="GO" id="GO:0060261">
    <property type="term" value="P:positive regulation of transcription initiation by RNA polymerase II"/>
    <property type="evidence" value="ECO:0007669"/>
    <property type="project" value="Ensembl"/>
</dbReference>
<dbReference type="GO" id="GO:0006290">
    <property type="term" value="P:pyrimidine dimer repair"/>
    <property type="evidence" value="ECO:0007669"/>
    <property type="project" value="Ensembl"/>
</dbReference>
<dbReference type="GO" id="GO:0032784">
    <property type="term" value="P:regulation of DNA-templated transcription elongation"/>
    <property type="evidence" value="ECO:0000314"/>
    <property type="project" value="UniProtKB"/>
</dbReference>
<dbReference type="GO" id="GO:0034243">
    <property type="term" value="P:regulation of transcription elongation by RNA polymerase II"/>
    <property type="evidence" value="ECO:0007669"/>
    <property type="project" value="Ensembl"/>
</dbReference>
<dbReference type="GO" id="GO:0010332">
    <property type="term" value="P:response to gamma radiation"/>
    <property type="evidence" value="ECO:0007669"/>
    <property type="project" value="Ensembl"/>
</dbReference>
<dbReference type="GO" id="GO:0006979">
    <property type="term" value="P:response to oxidative stress"/>
    <property type="evidence" value="ECO:0000314"/>
    <property type="project" value="UniProtKB"/>
</dbReference>
<dbReference type="GO" id="GO:0000303">
    <property type="term" value="P:response to superoxide"/>
    <property type="evidence" value="ECO:0007669"/>
    <property type="project" value="Ensembl"/>
</dbReference>
<dbReference type="GO" id="GO:0009636">
    <property type="term" value="P:response to toxic substance"/>
    <property type="evidence" value="ECO:0007669"/>
    <property type="project" value="Ensembl"/>
</dbReference>
<dbReference type="GO" id="GO:0010224">
    <property type="term" value="P:response to UV-B"/>
    <property type="evidence" value="ECO:0007669"/>
    <property type="project" value="Ensembl"/>
</dbReference>
<dbReference type="GO" id="GO:0010165">
    <property type="term" value="P:response to X-ray"/>
    <property type="evidence" value="ECO:0007669"/>
    <property type="project" value="Ensembl"/>
</dbReference>
<dbReference type="GO" id="GO:0000012">
    <property type="term" value="P:single strand break repair"/>
    <property type="evidence" value="ECO:0000314"/>
    <property type="project" value="UniProtKB"/>
</dbReference>
<dbReference type="GO" id="GO:0006366">
    <property type="term" value="P:transcription by RNA polymerase II"/>
    <property type="evidence" value="ECO:0000303"/>
    <property type="project" value="UniProtKB"/>
</dbReference>
<dbReference type="GO" id="GO:0006362">
    <property type="term" value="P:transcription elongation by RNA polymerase I"/>
    <property type="evidence" value="ECO:0007669"/>
    <property type="project" value="Ensembl"/>
</dbReference>
<dbReference type="GO" id="GO:0006283">
    <property type="term" value="P:transcription-coupled nucleotide-excision repair"/>
    <property type="evidence" value="ECO:0000314"/>
    <property type="project" value="UniProtKB"/>
</dbReference>
<dbReference type="CDD" id="cd21397">
    <property type="entry name" value="cc_ERCC-6_N"/>
    <property type="match status" value="1"/>
</dbReference>
<dbReference type="CDD" id="cd22254">
    <property type="entry name" value="CSB_WHD"/>
    <property type="match status" value="1"/>
</dbReference>
<dbReference type="CDD" id="cd18000">
    <property type="entry name" value="DEXHc_ERCC6"/>
    <property type="match status" value="1"/>
</dbReference>
<dbReference type="CDD" id="cd18793">
    <property type="entry name" value="SF2_C_SNF"/>
    <property type="match status" value="1"/>
</dbReference>
<dbReference type="FunFam" id="3.40.50.300:FF:000863">
    <property type="entry name" value="DNA excision repair protein ERCC-6"/>
    <property type="match status" value="1"/>
</dbReference>
<dbReference type="FunFam" id="3.40.50.10810:FF:000018">
    <property type="entry name" value="Putative DNA excision repair protein ERCC-6"/>
    <property type="match status" value="1"/>
</dbReference>
<dbReference type="Gene3D" id="3.40.50.300">
    <property type="entry name" value="P-loop containing nucleotide triphosphate hydrolases"/>
    <property type="match status" value="1"/>
</dbReference>
<dbReference type="Gene3D" id="3.40.50.10810">
    <property type="entry name" value="Tandem AAA-ATPase domain"/>
    <property type="match status" value="1"/>
</dbReference>
<dbReference type="InterPro" id="IPR014001">
    <property type="entry name" value="Helicase_ATP-bd"/>
</dbReference>
<dbReference type="InterPro" id="IPR001650">
    <property type="entry name" value="Helicase_C-like"/>
</dbReference>
<dbReference type="InterPro" id="IPR027417">
    <property type="entry name" value="P-loop_NTPase"/>
</dbReference>
<dbReference type="InterPro" id="IPR038718">
    <property type="entry name" value="SNF2-like_sf"/>
</dbReference>
<dbReference type="InterPro" id="IPR049730">
    <property type="entry name" value="SNF2/RAD54-like_C"/>
</dbReference>
<dbReference type="InterPro" id="IPR000330">
    <property type="entry name" value="SNF2_N"/>
</dbReference>
<dbReference type="InterPro" id="IPR050496">
    <property type="entry name" value="SNF2_RAD54_helicase_repair"/>
</dbReference>
<dbReference type="PANTHER" id="PTHR45629:SF7">
    <property type="entry name" value="DNA EXCISION REPAIR PROTEIN ERCC-6-RELATED"/>
    <property type="match status" value="1"/>
</dbReference>
<dbReference type="PANTHER" id="PTHR45629">
    <property type="entry name" value="SNF2/RAD54 FAMILY MEMBER"/>
    <property type="match status" value="1"/>
</dbReference>
<dbReference type="Pfam" id="PF00271">
    <property type="entry name" value="Helicase_C"/>
    <property type="match status" value="1"/>
</dbReference>
<dbReference type="Pfam" id="PF00176">
    <property type="entry name" value="SNF2-rel_dom"/>
    <property type="match status" value="1"/>
</dbReference>
<dbReference type="SMART" id="SM00487">
    <property type="entry name" value="DEXDc"/>
    <property type="match status" value="1"/>
</dbReference>
<dbReference type="SMART" id="SM00490">
    <property type="entry name" value="HELICc"/>
    <property type="match status" value="1"/>
</dbReference>
<dbReference type="SUPFAM" id="SSF52540">
    <property type="entry name" value="P-loop containing nucleoside triphosphate hydrolases"/>
    <property type="match status" value="2"/>
</dbReference>
<dbReference type="PROSITE" id="PS51192">
    <property type="entry name" value="HELICASE_ATP_BIND_1"/>
    <property type="match status" value="1"/>
</dbReference>
<dbReference type="PROSITE" id="PS51194">
    <property type="entry name" value="HELICASE_CTER"/>
    <property type="match status" value="1"/>
</dbReference>
<protein>
    <recommendedName>
        <fullName>DNA excision repair protein ERCC-6</fullName>
        <ecNumber evidence="8 34">3.6.4.-</ecNumber>
    </recommendedName>
    <alternativeName>
        <fullName>ATP-dependent helicase ERCC6</fullName>
    </alternativeName>
    <alternativeName>
        <fullName evidence="36">Cockayne syndrome protein CSB</fullName>
    </alternativeName>
</protein>
<evidence type="ECO:0000255" key="1">
    <source>
        <dbReference type="PROSITE-ProRule" id="PRU00541"/>
    </source>
</evidence>
<evidence type="ECO:0000255" key="2">
    <source>
        <dbReference type="PROSITE-ProRule" id="PRU00542"/>
    </source>
</evidence>
<evidence type="ECO:0000256" key="3">
    <source>
        <dbReference type="SAM" id="MobiDB-lite"/>
    </source>
</evidence>
<evidence type="ECO:0000269" key="4">
    <source>
    </source>
</evidence>
<evidence type="ECO:0000269" key="5">
    <source>
    </source>
</evidence>
<evidence type="ECO:0000269" key="6">
    <source>
    </source>
</evidence>
<evidence type="ECO:0000269" key="7">
    <source>
    </source>
</evidence>
<evidence type="ECO:0000269" key="8">
    <source>
    </source>
</evidence>
<evidence type="ECO:0000269" key="9">
    <source>
    </source>
</evidence>
<evidence type="ECO:0000269" key="10">
    <source>
    </source>
</evidence>
<evidence type="ECO:0000269" key="11">
    <source>
    </source>
</evidence>
<evidence type="ECO:0000269" key="12">
    <source>
    </source>
</evidence>
<evidence type="ECO:0000269" key="13">
    <source>
    </source>
</evidence>
<evidence type="ECO:0000269" key="14">
    <source>
    </source>
</evidence>
<evidence type="ECO:0000269" key="15">
    <source>
    </source>
</evidence>
<evidence type="ECO:0000269" key="16">
    <source>
    </source>
</evidence>
<evidence type="ECO:0000269" key="17">
    <source>
    </source>
</evidence>
<evidence type="ECO:0000269" key="18">
    <source>
    </source>
</evidence>
<evidence type="ECO:0000269" key="19">
    <source>
    </source>
</evidence>
<evidence type="ECO:0000269" key="20">
    <source>
    </source>
</evidence>
<evidence type="ECO:0000269" key="21">
    <source>
    </source>
</evidence>
<evidence type="ECO:0000269" key="22">
    <source>
    </source>
</evidence>
<evidence type="ECO:0000269" key="23">
    <source>
    </source>
</evidence>
<evidence type="ECO:0000269" key="24">
    <source>
    </source>
</evidence>
<evidence type="ECO:0000269" key="25">
    <source>
    </source>
</evidence>
<evidence type="ECO:0000269" key="26">
    <source>
    </source>
</evidence>
<evidence type="ECO:0000269" key="27">
    <source>
    </source>
</evidence>
<evidence type="ECO:0000269" key="28">
    <source>
    </source>
</evidence>
<evidence type="ECO:0000269" key="29">
    <source>
    </source>
</evidence>
<evidence type="ECO:0000269" key="30">
    <source>
    </source>
</evidence>
<evidence type="ECO:0000269" key="31">
    <source>
    </source>
</evidence>
<evidence type="ECO:0000269" key="32">
    <source>
    </source>
</evidence>
<evidence type="ECO:0000269" key="33">
    <source>
    </source>
</evidence>
<evidence type="ECO:0000269" key="34">
    <source>
    </source>
</evidence>
<evidence type="ECO:0000269" key="35">
    <source ref="3"/>
</evidence>
<evidence type="ECO:0000303" key="36">
    <source>
    </source>
</evidence>
<evidence type="ECO:0000303" key="37">
    <source>
    </source>
</evidence>
<evidence type="ECO:0000303" key="38">
    <source>
    </source>
</evidence>
<evidence type="ECO:0000305" key="39"/>
<evidence type="ECO:0000305" key="40">
    <source>
    </source>
</evidence>
<evidence type="ECO:0000305" key="41">
    <source>
    </source>
</evidence>
<evidence type="ECO:0000312" key="42">
    <source>
        <dbReference type="HGNC" id="HGNC:3438"/>
    </source>
</evidence>
<evidence type="ECO:0007744" key="43">
    <source>
        <dbReference type="PDB" id="7OO3"/>
    </source>
</evidence>
<evidence type="ECO:0007744" key="44">
    <source>
        <dbReference type="PDB" id="7OOB"/>
    </source>
</evidence>
<evidence type="ECO:0007744" key="45">
    <source>
        <dbReference type="PDB" id="7OOP"/>
    </source>
</evidence>
<evidence type="ECO:0007744" key="46">
    <source>
        <dbReference type="PDB" id="7OPC"/>
    </source>
</evidence>
<evidence type="ECO:0007744" key="47">
    <source>
        <dbReference type="PDB" id="7OPD"/>
    </source>
</evidence>
<evidence type="ECO:0007744" key="48">
    <source>
        <dbReference type="PDB" id="8B3D"/>
    </source>
</evidence>
<evidence type="ECO:0007744" key="49">
    <source>
    </source>
</evidence>
<evidence type="ECO:0007744" key="50">
    <source>
    </source>
</evidence>
<evidence type="ECO:0007744" key="51">
    <source>
    </source>
</evidence>
<evidence type="ECO:0007744" key="52">
    <source>
    </source>
</evidence>
<evidence type="ECO:0007744" key="53">
    <source>
    </source>
</evidence>
<evidence type="ECO:0007744" key="54">
    <source>
    </source>
</evidence>
<evidence type="ECO:0007744" key="55">
    <source>
    </source>
</evidence>
<evidence type="ECO:0007829" key="56">
    <source>
        <dbReference type="PDB" id="4CVO"/>
    </source>
</evidence>
<evidence type="ECO:0007829" key="57">
    <source>
        <dbReference type="PDB" id="7OO3"/>
    </source>
</evidence>
<evidence type="ECO:0007829" key="58">
    <source>
        <dbReference type="PDB" id="8B3D"/>
    </source>
</evidence>
<evidence type="ECO:0007829" key="59">
    <source>
        <dbReference type="PDB" id="9BZ0"/>
    </source>
</evidence>
<evidence type="ECO:0007829" key="60">
    <source>
        <dbReference type="PDB" id="9FD2"/>
    </source>
</evidence>
<gene>
    <name evidence="37 42" type="primary">ERCC6</name>
    <name evidence="36" type="synonym">CSB</name>
</gene>
<proteinExistence type="evidence at protein level"/>